<proteinExistence type="evidence at protein level"/>
<comment type="function">
    <text evidence="1 2 4 5 6 7 8 11 14 15 16 18 21 23 24 25 26 29 31 32 33 34 39">Electrogenic voltage-dependent transporter that mediates the transport of a variety of organic cations such as endogenous bioactive amines, cationic drugs and xenobiotics (PubMed:11388889, PubMed:11408531, PubMed:12439218, PubMed:12719534, PubMed:15389554, PubMed:16263091, PubMed:16272756, PubMed:16581093, PubMed:19536068, PubMed:21128598, PubMed:23680637, PubMed:24961373, PubMed:34040533, PubMed:9187257, PubMed:9260930, PubMed:9655880). Functions as a pH- and Na(+)-independent, bidirectional transporter (By similarity). Cation cellular uptake or release is driven by the electrochemical potential (i.e. membrane potential and concentration gradient) and substrate selectivity (By similarity). Hydrophobicity is a major requirement for recognition in polyvalent substrates and inhibitors (By similarity). Primarily expressed at the basolateral membrane of hepatocytes and proximal tubules and involved in the uptake and disposition of cationic compounds by hepatic and renal clearance from the blood flow (By similarity). Most likely functions as an uptake carrier in enterocytes contributing to the intestinal elimination of organic cations from the systemic circulation (PubMed:16263091). Transports endogenous monoamines such as N-1-methylnicotinamide (NMN), guanidine, histamine, neurotransmitters dopamine, serotonin and adrenaline (PubMed:12439218, PubMed:24961373, PubMed:35469921, PubMed:9260930). Also transports natural polyamines such as spermidine, agmatine and putrescine at low affinity, but relatively high turnover (PubMed:21128598). Involved in the hepatic uptake of vitamin B1/thiamine, hence regulating hepatic lipid and energy metabolism (PubMed:24961373). Mediates the bidirectional transport of acetylcholine (ACh) at the apical membrane of ciliated cell in airway epithelium, thereby playing a role in luminal release of ACh from bronchial epithelium (PubMed:15817714). Transports dopaminergic neuromodulators cyclo(his-pro) and salsolinol with lower efficency (PubMed:17460754). Also capable of transporting non-amine endogenous compounds such as prostaglandin E2 (PGE2) and prostaglandin F2-alpha (PGF2-alpha) (PubMed:11907186). May contribute to the transport of cationic compounds in testes across the blood-testis-barrier (Probable). Also involved in the uptake of xenobiotics tributylmethylammonium (TBuMA), quinidine, N-methyl-quinine (NMQ), N-methyl-quinidine (NMQD) N-(4,4-azo-n-pentyl)-quinuclidine (APQ), azidoprocainamide methoiodide (AMP), N-(4,4-azo-n-pentyl)-21-deoxyajmalinium (APDA) and 4-(4-(dimethylamino)styryl)-N-methylpyridinium (ASP) (PubMed:11408531, PubMed:15389554, PubMed:35469921, PubMed:9260930).</text>
</comment>
<comment type="function">
    <molecule>Isoform 1</molecule>
    <text evidence="4">Mediates the uptake of 1-methyl-4-phenylpyridinium (MPP(+)).</text>
</comment>
<comment type="function">
    <molecule>Isoform 2</molecule>
    <text evidence="4">Not able to uptake 1-methyl-4-phenylpyridinium (MPP(+)).</text>
</comment>
<comment type="function">
    <molecule>Isoform 3</molecule>
    <text evidence="4">Not able to uptake 1-methyl-4-phenylpyridinium (MPP(+)).</text>
</comment>
<comment type="function">
    <molecule>Isoform 4</molecule>
    <text evidence="4">Not able to uptake 1-methyl-4-phenylpyridinium (MPP(+)).</text>
</comment>
<comment type="catalytic activity">
    <reaction evidence="33">
        <text>1-methylnicotinamide(out) = 1-methylnicotinamide(in)</text>
        <dbReference type="Rhea" id="RHEA:73859"/>
        <dbReference type="ChEBI" id="CHEBI:16797"/>
    </reaction>
</comment>
<comment type="catalytic activity">
    <reaction evidence="31">
        <text>dopamine(out) = dopamine(in)</text>
        <dbReference type="Rhea" id="RHEA:73863"/>
        <dbReference type="ChEBI" id="CHEBI:59905"/>
    </reaction>
</comment>
<comment type="catalytic activity">
    <reaction evidence="7 26 31">
        <text>serotonin(out) = serotonin(in)</text>
        <dbReference type="Rhea" id="RHEA:73867"/>
        <dbReference type="ChEBI" id="CHEBI:350546"/>
    </reaction>
</comment>
<comment type="catalytic activity">
    <reaction evidence="31">
        <text>(R)-adrenaline(out) = (R)-adrenaline(in)</text>
        <dbReference type="Rhea" id="RHEA:73875"/>
        <dbReference type="ChEBI" id="CHEBI:71406"/>
    </reaction>
</comment>
<comment type="catalytic activity">
    <reaction evidence="31">
        <text>histamine(out) = histamine(in)</text>
        <dbReference type="Rhea" id="RHEA:73879"/>
        <dbReference type="ChEBI" id="CHEBI:58432"/>
    </reaction>
</comment>
<comment type="catalytic activity">
    <reaction evidence="2">
        <text>guanidine(out) = guanidine(in)</text>
        <dbReference type="Rhea" id="RHEA:73883"/>
        <dbReference type="ChEBI" id="CHEBI:30087"/>
    </reaction>
</comment>
<comment type="catalytic activity">
    <reaction evidence="14">
        <text>acetylcholine(in) = acetylcholine(out)</text>
        <dbReference type="Rhea" id="RHEA:74663"/>
        <dbReference type="ChEBI" id="CHEBI:15355"/>
    </reaction>
</comment>
<comment type="catalytic activity">
    <reaction evidence="26 31">
        <text>thiamine(in) = thiamine(out)</text>
        <dbReference type="Rhea" id="RHEA:34919"/>
        <dbReference type="ChEBI" id="CHEBI:18385"/>
    </reaction>
</comment>
<comment type="catalytic activity">
    <reaction evidence="24">
        <text>agmatine(out) = agmatine(in)</text>
        <dbReference type="Rhea" id="RHEA:72131"/>
        <dbReference type="ChEBI" id="CHEBI:58145"/>
    </reaction>
</comment>
<comment type="catalytic activity">
    <reaction evidence="24">
        <text>putrescine(out) = putrescine(in)</text>
        <dbReference type="Rhea" id="RHEA:72135"/>
        <dbReference type="ChEBI" id="CHEBI:326268"/>
    </reaction>
</comment>
<comment type="catalytic activity">
    <reaction evidence="2">
        <text>spermidine(in) = spermidine(out)</text>
        <dbReference type="Rhea" id="RHEA:35039"/>
        <dbReference type="ChEBI" id="CHEBI:57834"/>
    </reaction>
</comment>
<comment type="catalytic activity">
    <reaction evidence="21">
        <text>L-histidyl-L-proline diketopiperazine(in) = L-histidyl-L-proline diketopiperazine(out)</text>
        <dbReference type="Rhea" id="RHEA:74787"/>
        <dbReference type="ChEBI" id="CHEBI:90039"/>
    </reaction>
</comment>
<comment type="catalytic activity">
    <reaction evidence="21">
        <text>(R)-salsolinol(in) = (R)-salsolinol(out)</text>
        <dbReference type="Rhea" id="RHEA:74791"/>
        <dbReference type="ChEBI" id="CHEBI:194082"/>
    </reaction>
</comment>
<comment type="catalytic activity">
    <reaction evidence="6">
        <text>prostaglandin F2alpha(out) = prostaglandin F2alpha(in)</text>
        <dbReference type="Rhea" id="RHEA:50988"/>
        <dbReference type="ChEBI" id="CHEBI:57404"/>
    </reaction>
</comment>
<comment type="catalytic activity">
    <reaction evidence="6">
        <text>prostaglandin E2(out) = prostaglandin E2(in)</text>
        <dbReference type="Rhea" id="RHEA:50984"/>
        <dbReference type="ChEBI" id="CHEBI:606564"/>
    </reaction>
</comment>
<comment type="activity regulation">
    <text evidence="2 11">Phosphorylation of the transporter leads to changes in its substrate affinity, resulting in a regulation of the transport activity (PubMed:15389554). In contrast with rat ortholog, ASP uptake is inhibited by protein kinase A (PKA) and C (PKC) activation (PubMed:15389554). ASP uptake is also endogenously activated by calmodulin, the calmodulin-dependent kinase II and LCK tyrosine kinase (PubMed:15389554). Inhibited by cGMP, most likely through a cGMP-binding protein that interacts with OCT1 (By similarity).</text>
</comment>
<comment type="biophysicochemical properties">
    <kinetics>
        <KM evidence="21">440 uM for salsolinol</KM>
        <KM evidence="31">558 uM for adrenaline</KM>
        <KM evidence="21">655 uM for cyclo(his-pro)</KM>
        <KM evidence="31">663 uM for serotonin</KM>
        <KM evidence="31">674 uM for dopamine</KM>
        <KM evidence="6">647 nM for prostaglandin E2</KM>
        <KM evidence="6">477 nM for prostaglandin F2-alpha</KM>
        <KM evidence="26">780 uM for thiamine</KM>
        <KM evidence="31">1057 uM for thiamine</KM>
        <KM evidence="31">4675 uM for histamine</KM>
        <KM evidence="24">18730 uM for agmatine</KM>
        <KM evidence="5">19.5 uM for NMQ</KM>
        <KM evidence="5">11.5 uM for NMQD</KM>
        <KM evidence="5">53 uM for TBuMA</KM>
        <KM evidence="5">100.9 uM for APM</KM>
        <Vmax evidence="21">1.0 nmol/min/mg enzyme for salsolinol uptake</Vmax>
        <Vmax evidence="31">1.123 nmol/min/mg enzyme with adrenaline as substrate</Vmax>
        <Vmax evidence="21">6.9 nmol/min/mg enzyme for cyclo(his-pro) uptake</Vmax>
        <Vmax evidence="31">6.183 nmol/min/mg enzyme with serotonin as substrate</Vmax>
        <Vmax evidence="31">0.718 nmol/min/mg enzyme with dopamine as substrate</Vmax>
        <Vmax evidence="26">2.77 nmol/min/mg enzyme with thiamine as substrate</Vmax>
        <Vmax evidence="31">8.261 nmol/min/mg enzyme with thiamine as substrate</Vmax>
        <Vmax evidence="31">5.124 nmol/min/mg enzyme with histamine as substrate</Vmax>
    </kinetics>
    <phDependence>
        <text evidence="4 5">Optimum pH is 8.5 for the transport of MPP (PubMed:11388889). While optimum pH is 6.0 for the transport of the drug quinidine, no transport activity is observed at pH 7.5, possibly due to the protonation of quininide at pH6.0 (PubMed:11408531).</text>
    </phDependence>
    <temperatureDependence>
        <text evidence="34">Optimum temperature is 22 degrees Celsius for the transport of TEA. Doesn't show any transport activity of TEA at 4 degrees Celsius.</text>
    </temperatureDependence>
</comment>
<comment type="interaction">
    <interactant intactId="EBI-1172714">
        <id>O15245</id>
    </interactant>
    <interactant intactId="EBI-1057080">
        <id>Q96G23</id>
        <label>CERS2</label>
    </interactant>
    <organismsDiffer>false</organismsDiffer>
    <experiments>3</experiments>
</comment>
<comment type="interaction">
    <interactant intactId="EBI-1172714">
        <id>O15245</id>
    </interactant>
    <interactant intactId="EBI-741850">
        <id>Q9BZL3</id>
        <label>SMIM3</label>
    </interactant>
    <organismsDiffer>false</organismsDiffer>
    <experiments>3</experiments>
</comment>
<comment type="subcellular location">
    <subcellularLocation>
        <location evidence="8">Basolateral cell membrane</location>
        <topology evidence="37">Multi-pass membrane protein</topology>
    </subcellularLocation>
    <subcellularLocation>
        <location evidence="14 23 25">Apical cell membrane</location>
        <topology evidence="37">Multi-pass membrane protein</topology>
    </subcellularLocation>
    <subcellularLocation>
        <location evidence="15">Lateral cell membrane</location>
        <topology evidence="37">Multi-pass membrane protein</topology>
    </subcellularLocation>
    <subcellularLocation>
        <location evidence="30">Basal cell membrane</location>
        <topology evidence="37">Multi-pass membrane protein</topology>
    </subcellularLocation>
    <subcellularLocation>
        <location evidence="31">Cell membrane</location>
        <topology evidence="37">Multi-pass membrane protein</topology>
    </subcellularLocation>
    <text evidence="2 14 15 23 25 30">Localized to the sinusoidal/basolateral membrane of hepatocytes (By similarity). Mainly localized to the basolateral membrane of renal proximal tubular cells (By similarity). However, also identified at the apical side of proximal tubular cells (PubMed:19536068). Mainly expressed at the lateral membrane of enterocytes (PubMed:16263091). Also observed at the apical side of enterocytes (PubMed:23680637). Localized to the luminal/apical membrane of ciliated epithelial cells in bronchi (PubMed:15817714). Localized to the basal membrane of Sertoli cells (PubMed:35307651).</text>
</comment>
<comment type="alternative products">
    <event type="alternative splicing"/>
    <isoform>
        <id>O15245-1</id>
        <name>1</name>
        <name>hOCT1G/L554</name>
        <sequence type="displayed"/>
    </isoform>
    <isoform>
        <id>O15245-2</id>
        <name>2</name>
        <name>hOCT1G/L506</name>
        <sequence type="described" ref="VSP_033589 VSP_033590"/>
    </isoform>
    <isoform>
        <id>O15245-3</id>
        <name>3</name>
        <name>hOCT1G483</name>
        <sequence type="described" ref="VSP_033588"/>
    </isoform>
    <isoform>
        <id>O15245-4</id>
        <name>4</name>
        <name>hOCT1G353</name>
        <sequence type="described" ref="VSP_033587"/>
    </isoform>
</comment>
<comment type="tissue specificity">
    <text evidence="4 14 15 25 30 32 33">Widely expressed with high level in liver (PubMed:11388889, PubMed:23680637, PubMed:9187257, PubMed:9260930). In liver, expressed around the central vein (PubMed:16263091). Expressed in kidney (PubMed:9187257, PubMed:9260930). Expressed in small intestine enterocytes (PubMed:16263091, PubMed:23680637). Localized to peritubular myoid cells, Leydig cells and moderately to the basal membrane of Sertoli cells in testes (PubMed:35307651). Expressed in tracheal and bronchial ciliated epithelium in the respiratory tract (PubMed:15817714). Also expressed in skeletal muscle, stomach, spleen, heart, placentacolon, brain, granulycytes and lympohocytes (PubMed:9187257, PubMed:9260930).</text>
</comment>
<comment type="tissue specificity">
    <molecule>Isoform 1</molecule>
    <text evidence="4">Expressed in liver and in glial cell lines.</text>
</comment>
<comment type="tissue specificity">
    <molecule>Isoform 2</molecule>
    <text evidence="4">Expressed in liver and in glial cell lines.</text>
</comment>
<comment type="tissue specificity">
    <molecule>Isoform 3</molecule>
    <text evidence="4">Expressed in glial cell lines. Not expressed in liver.</text>
</comment>
<comment type="tissue specificity">
    <molecule>Isoform 4</molecule>
    <text evidence="4">Expressed in glial cell lines. Not expressed in liver.</text>
</comment>
<comment type="induction">
    <text evidence="17 22">In the liver activated by HNF4A and suppressed by bile acids via NR0B2. Increased by cholesterol treatment in hepatocyte cells.</text>
</comment>
<comment type="domain">
    <text evidence="2 31">A large substrate binding region with partially overlapping binding domains for structurally different substrates is formed by several transmembrane helix domains (TMH) including TMH 2, 4, 10 and 11, and it is alternatingly exposed to the extracellular or intracellular side during substrate transport (By similarity). Amino acids in TMH 1 confer major functional differences between human and mouse orthologs (PubMed:35469921).</text>
</comment>
<comment type="domain">
    <text evidence="38">Contains one proline-rich sequence (Pro-Glu-Ser-Pro-Arg) that is required for transport activity.</text>
</comment>
<comment type="PTM">
    <text evidence="2">Phosphorylated.</text>
</comment>
<comment type="miscellaneous">
    <text evidence="4 7 8 15 16 18 19 20 23 25 26 29 31 32 33 34">Involved in the uptake of clinically used drugs including diabetes treatment medicine metformin, neurotoxins 1-methyl-4-phenylpyridinium (MPP(+)) and iobenguane and platinum-based drug cisplatin (PubMed:11388889, PubMed:12439218, PubMed:12719534, PubMed:16263091, PubMed:16272756, PubMed:16581093, PubMed:16914559, PubMed:16951202, PubMed:19536068, PubMed:23680637, PubMed:24961373, PubMed:35469921, PubMed:9187257, PubMed:9260930, PubMed:9655880). Also involved in metformin efflux transport (PubMed:34040533). Metformin competitively inhibits OCT1-mediated thiamine uptake, leading to a decrease in hepatic steatosis (PubMed:24961373). Plays a role in the anticancer activity of cisplatin and may contribute to antitumor specificity (PubMed:16914559, PubMed:16951202).</text>
</comment>
<comment type="miscellaneous">
    <molecule>Isoform 4</molecule>
    <text evidence="37">May be produced at very low levels due to a premature stop codon in the mRNA, leading to nonsense-mediated mRNA decay.</text>
</comment>
<comment type="similarity">
    <text evidence="37">Belongs to the major facilitator (TC 2.A.1) superfamily. Organic cation transporter (TC 2.A.1.19) family.</text>
</comment>
<comment type="caution">
    <text evidence="2 15 18 23 25 28 29 31">Cellular localization of OCT1 in the intestine and the kidney remains to be finally defined. While most authors have deduced a localization at the basolateral side of enterocytes consistent with a physiological role in organic anions uptake from the blood flow and intestinal excretion (PubMed:16263091), other studies demonstrated an apical localization (PubMed:23680637), supporting a function in intestinal absorption of organic anions and drugs (PubMed:16263091, PubMed:23680637). Similarly, contradictory results localized the transporter to the basolateral side (By similarity) or to the apical side (PubMed:19536068) of proximal tubules (By similarity) (PubMed:19536068). Although initially reported to transport carnitine across the hepatocyte membrane (PubMed:28942964), another study was unable to verify this finding (PubMed:28942964, PubMed:34040533). Affinity and capacity of the transporter for endogenous substrates vary among orthologs (PubMed:16581093, PubMed:34040533, PubMed:35469921). For endogenous compounds such as dopamine, histamine, serotonin and thiamine, mouse ortholog display higher affinity and capacity compared with human OCT1 (PubMed:35469921). In contrast with mouse ortholog, not able to transport carnitine, noradrenaline and choline (PubMed:34040533).</text>
</comment>
<sequence>MPTVDDILEQVGESGWFQKQAFLILCLLSAAFAPICVGIVFLGFTPDHHCQSPGVAELSQRCGWSPAEELNYTVPGLGPAGEAFLGQCRRYEVDWNQSALSCVDPLASLATNRSHLPLGPCQDGWVYDTPGSSIVTEFNLVCADSWKLDLFQSCLNAGFLFGSLGVGYFADRFGRKLCLLGTVLVNAVSGVLMAFSPNYMSMLLFRLLQGLVSKGNWMAGYTLITEFVGSGSRRTVAIMYQMAFTVGLVALTGLAYALPHWRWLQLAVSLPTFLFLLYYWCVPESPRWLLSQKRNTEAIKIMDHIAQKNGKLPPADLKMLSLEEDVTEKLSPSFADLFRTPRLRKRTFILMYLWFTDSVLYQGLILHMGATSGNLYLDFLYSALVEIPGAFIALITIDRVGRIYPMAMSNLLAGAACLVMIFISPDLHWLNIIIMCVGRMGITIAIQMICLVNAELYPTFVRNLGVMVCSSLCDIGGIITPFIVFRLREVWQALPLILFAVLGLLAAGVTLLLPETKGVALPETMKDAENLGRKAKPKENTIYLKVQTSEPSGT</sequence>
<organism>
    <name type="scientific">Homo sapiens</name>
    <name type="common">Human</name>
    <dbReference type="NCBI Taxonomy" id="9606"/>
    <lineage>
        <taxon>Eukaryota</taxon>
        <taxon>Metazoa</taxon>
        <taxon>Chordata</taxon>
        <taxon>Craniata</taxon>
        <taxon>Vertebrata</taxon>
        <taxon>Euteleostomi</taxon>
        <taxon>Mammalia</taxon>
        <taxon>Eutheria</taxon>
        <taxon>Euarchontoglires</taxon>
        <taxon>Primates</taxon>
        <taxon>Haplorrhini</taxon>
        <taxon>Catarrhini</taxon>
        <taxon>Hominidae</taxon>
        <taxon>Homo</taxon>
    </lineage>
</organism>
<dbReference type="EMBL" id="X98332">
    <property type="protein sequence ID" value="CAA66977.1"/>
    <property type="molecule type" value="mRNA"/>
</dbReference>
<dbReference type="EMBL" id="U77086">
    <property type="protein sequence ID" value="AAB67703.1"/>
    <property type="molecule type" value="mRNA"/>
</dbReference>
<dbReference type="EMBL" id="AJ243995">
    <property type="protein sequence ID" value="CAB95971.1"/>
    <property type="molecule type" value="Genomic_DNA"/>
</dbReference>
<dbReference type="EMBL" id="AJ243996">
    <property type="protein sequence ID" value="CAB95971.1"/>
    <property type="status" value="JOINED"/>
    <property type="molecule type" value="Genomic_DNA"/>
</dbReference>
<dbReference type="EMBL" id="AJ243998">
    <property type="protein sequence ID" value="CAB95971.1"/>
    <property type="status" value="JOINED"/>
    <property type="molecule type" value="Genomic_DNA"/>
</dbReference>
<dbReference type="EMBL" id="AJ243999">
    <property type="protein sequence ID" value="CAB95971.1"/>
    <property type="status" value="JOINED"/>
    <property type="molecule type" value="Genomic_DNA"/>
</dbReference>
<dbReference type="EMBL" id="AJ244000">
    <property type="protein sequence ID" value="CAB95971.1"/>
    <property type="status" value="JOINED"/>
    <property type="molecule type" value="Genomic_DNA"/>
</dbReference>
<dbReference type="EMBL" id="AJ245460">
    <property type="protein sequence ID" value="CAB95971.1"/>
    <property type="status" value="JOINED"/>
    <property type="molecule type" value="Genomic_DNA"/>
</dbReference>
<dbReference type="EMBL" id="AJ276051">
    <property type="protein sequence ID" value="CAB95971.1"/>
    <property type="status" value="JOINED"/>
    <property type="molecule type" value="Genomic_DNA"/>
</dbReference>
<dbReference type="EMBL" id="AJ276052">
    <property type="protein sequence ID" value="CAB95971.1"/>
    <property type="status" value="JOINED"/>
    <property type="molecule type" value="Genomic_DNA"/>
</dbReference>
<dbReference type="EMBL" id="AJ276053">
    <property type="protein sequence ID" value="CAB95971.1"/>
    <property type="status" value="JOINED"/>
    <property type="molecule type" value="Genomic_DNA"/>
</dbReference>
<dbReference type="EMBL" id="AK289887">
    <property type="protein sequence ID" value="BAF82576.1"/>
    <property type="molecule type" value="mRNA"/>
</dbReference>
<dbReference type="EMBL" id="AL353625">
    <property type="status" value="NOT_ANNOTATED_CDS"/>
    <property type="molecule type" value="Genomic_DNA"/>
</dbReference>
<dbReference type="EMBL" id="BC126364">
    <property type="protein sequence ID" value="AAI26365.1"/>
    <property type="molecule type" value="mRNA"/>
</dbReference>
<dbReference type="CCDS" id="CCDS5274.1">
    <molecule id="O15245-1"/>
</dbReference>
<dbReference type="CCDS" id="CCDS5275.1">
    <molecule id="O15245-2"/>
</dbReference>
<dbReference type="RefSeq" id="NP_003048.1">
    <molecule id="O15245-1"/>
    <property type="nucleotide sequence ID" value="NM_003057.3"/>
</dbReference>
<dbReference type="RefSeq" id="NP_694857.1">
    <molecule id="O15245-2"/>
    <property type="nucleotide sequence ID" value="NM_153187.2"/>
</dbReference>
<dbReference type="RefSeq" id="XP_006715615.1">
    <molecule id="O15245-3"/>
    <property type="nucleotide sequence ID" value="XM_006715552.3"/>
</dbReference>
<dbReference type="PDB" id="8ET6">
    <property type="method" value="EM"/>
    <property type="resolution" value="3.57 A"/>
    <property type="chains" value="A=1-554"/>
</dbReference>
<dbReference type="PDB" id="8ET7">
    <property type="method" value="EM"/>
    <property type="resolution" value="3.77 A"/>
    <property type="chains" value="A=1-554"/>
</dbReference>
<dbReference type="PDB" id="8ET8">
    <property type="method" value="EM"/>
    <property type="resolution" value="3.45 A"/>
    <property type="chains" value="A=1-554"/>
</dbReference>
<dbReference type="PDB" id="8JTS">
    <property type="method" value="EM"/>
    <property type="resolution" value="4.14 A"/>
    <property type="chains" value="A=1-554"/>
</dbReference>
<dbReference type="PDB" id="8JTT">
    <property type="method" value="EM"/>
    <property type="resolution" value="3.87 A"/>
    <property type="chains" value="A=3-532"/>
</dbReference>
<dbReference type="PDB" id="8JTV">
    <property type="method" value="EM"/>
    <property type="resolution" value="3.77 A"/>
    <property type="chains" value="A=1-554"/>
</dbReference>
<dbReference type="PDB" id="8JTW">
    <property type="method" value="EM"/>
    <property type="resolution" value="3.23 A"/>
    <property type="chains" value="A=1-554"/>
</dbReference>
<dbReference type="PDB" id="8JTX">
    <property type="method" value="EM"/>
    <property type="resolution" value="3.28 A"/>
    <property type="chains" value="A=1-554"/>
</dbReference>
<dbReference type="PDB" id="8JTY">
    <property type="method" value="EM"/>
    <property type="resolution" value="3.26 A"/>
    <property type="chains" value="A=1-554"/>
</dbReference>
<dbReference type="PDB" id="8JTZ">
    <property type="method" value="EM"/>
    <property type="resolution" value="3.27 A"/>
    <property type="chains" value="A=1-554"/>
</dbReference>
<dbReference type="PDB" id="8JU0">
    <property type="method" value="EM"/>
    <property type="resolution" value="2.98 A"/>
    <property type="chains" value="A=1-554"/>
</dbReference>
<dbReference type="PDB" id="8SC1">
    <property type="method" value="EM"/>
    <property type="resolution" value="2.92 A"/>
    <property type="chains" value="A=1-554"/>
</dbReference>
<dbReference type="PDB" id="8SC2">
    <property type="method" value="EM"/>
    <property type="resolution" value="3.36 A"/>
    <property type="chains" value="A=19-554"/>
</dbReference>
<dbReference type="PDB" id="8SC3">
    <property type="method" value="EM"/>
    <property type="resolution" value="3.24 A"/>
    <property type="chains" value="A=1-554"/>
</dbReference>
<dbReference type="PDB" id="8SC4">
    <property type="method" value="EM"/>
    <property type="resolution" value="3.46 A"/>
    <property type="chains" value="A=1-554"/>
</dbReference>
<dbReference type="PDB" id="8SC6">
    <property type="method" value="EM"/>
    <property type="resolution" value="3.13 A"/>
    <property type="chains" value="A=1-554"/>
</dbReference>
<dbReference type="PDBsum" id="8ET6"/>
<dbReference type="PDBsum" id="8ET7"/>
<dbReference type="PDBsum" id="8ET8"/>
<dbReference type="PDBsum" id="8JTS"/>
<dbReference type="PDBsum" id="8JTT"/>
<dbReference type="PDBsum" id="8JTV"/>
<dbReference type="PDBsum" id="8JTW"/>
<dbReference type="PDBsum" id="8JTX"/>
<dbReference type="PDBsum" id="8JTY"/>
<dbReference type="PDBsum" id="8JTZ"/>
<dbReference type="PDBsum" id="8JU0"/>
<dbReference type="PDBsum" id="8SC1"/>
<dbReference type="PDBsum" id="8SC2"/>
<dbReference type="PDBsum" id="8SC3"/>
<dbReference type="PDBsum" id="8SC4"/>
<dbReference type="PDBsum" id="8SC6"/>
<dbReference type="EMDB" id="EMD-28586"/>
<dbReference type="EMDB" id="EMD-28587"/>
<dbReference type="EMDB" id="EMD-28588"/>
<dbReference type="EMDB" id="EMD-36651"/>
<dbReference type="EMDB" id="EMD-36652"/>
<dbReference type="EMDB" id="EMD-36653"/>
<dbReference type="EMDB" id="EMD-36654"/>
<dbReference type="EMDB" id="EMD-36655"/>
<dbReference type="EMDB" id="EMD-36656"/>
<dbReference type="EMDB" id="EMD-36657"/>
<dbReference type="EMDB" id="EMD-36658"/>
<dbReference type="EMDB" id="EMD-40334"/>
<dbReference type="EMDB" id="EMD-40335"/>
<dbReference type="EMDB" id="EMD-40336"/>
<dbReference type="EMDB" id="EMD-40337"/>
<dbReference type="EMDB" id="EMD-40339"/>
<dbReference type="SMR" id="O15245"/>
<dbReference type="BioGRID" id="112467">
    <property type="interactions" value="93"/>
</dbReference>
<dbReference type="FunCoup" id="O15245">
    <property type="interactions" value="58"/>
</dbReference>
<dbReference type="IntAct" id="O15245">
    <property type="interactions" value="2"/>
</dbReference>
<dbReference type="STRING" id="9606.ENSP00000355930"/>
<dbReference type="BindingDB" id="O15245"/>
<dbReference type="ChEMBL" id="CHEMBL5685"/>
<dbReference type="DrugBank" id="DB14973">
    <property type="generic name" value="Abrocitinib"/>
</dbReference>
<dbReference type="DrugBank" id="DB03128">
    <property type="generic name" value="Acetylcholine"/>
</dbReference>
<dbReference type="DrugBank" id="DB00787">
    <property type="generic name" value="Acyclovir"/>
</dbReference>
<dbReference type="DrugBank" id="DB08838">
    <property type="generic name" value="Agmatine"/>
</dbReference>
<dbReference type="DrugBank" id="DB00915">
    <property type="generic name" value="Amantadine"/>
</dbReference>
<dbReference type="DrugBank" id="DB06288">
    <property type="generic name" value="Amisulpride"/>
</dbReference>
<dbReference type="DrugBank" id="DB12597">
    <property type="generic name" value="Asciminib"/>
</dbReference>
<dbReference type="DrugBank" id="DB16098">
    <property type="generic name" value="Atogepant"/>
</dbReference>
<dbReference type="DrugBank" id="DB12267">
    <property type="generic name" value="Brigatinib"/>
</dbReference>
<dbReference type="DrugBank" id="DB04830">
    <property type="generic name" value="Buformin"/>
</dbReference>
<dbReference type="DrugBank" id="DB00520">
    <property type="generic name" value="Caspofungin"/>
</dbReference>
<dbReference type="DrugBank" id="DB01114">
    <property type="generic name" value="Chlorpheniramine"/>
</dbReference>
<dbReference type="DrugBank" id="DB00122">
    <property type="generic name" value="Choline"/>
</dbReference>
<dbReference type="DrugBank" id="DB14006">
    <property type="generic name" value="Choline salicylate"/>
</dbReference>
<dbReference type="DrugBank" id="DB00501">
    <property type="generic name" value="Cimetidine"/>
</dbReference>
<dbReference type="DrugBank" id="DB00758">
    <property type="generic name" value="Clopidogrel"/>
</dbReference>
<dbReference type="DrugBank" id="DB00363">
    <property type="generic name" value="Clozapine"/>
</dbReference>
<dbReference type="DrugBank" id="DB00318">
    <property type="generic name" value="Codeine"/>
</dbReference>
<dbReference type="DrugBank" id="DB00434">
    <property type="generic name" value="Cyproheptadine"/>
</dbReference>
<dbReference type="DrugBank" id="DB11963">
    <property type="generic name" value="Dacomitinib"/>
</dbReference>
<dbReference type="DrugBank" id="DB01151">
    <property type="generic name" value="Desipramine"/>
</dbReference>
<dbReference type="DrugBank" id="DB16650">
    <property type="generic name" value="Deucravacitinib"/>
</dbReference>
<dbReference type="DrugBank" id="DB09555">
    <property type="generic name" value="Dexchlorpheniramine maleate"/>
</dbReference>
<dbReference type="DrugBank" id="DB00280">
    <property type="generic name" value="Disopyramide"/>
</dbReference>
<dbReference type="DrugBank" id="DB00988">
    <property type="generic name" value="Dopamine"/>
</dbReference>
<dbReference type="DrugBank" id="DB00590">
    <property type="generic name" value="Doxazosin"/>
</dbReference>
<dbReference type="DrugBank" id="DB04855">
    <property type="generic name" value="Dronedarone"/>
</dbReference>
<dbReference type="DrugBank" id="DB00625">
    <property type="generic name" value="Efavirenz"/>
</dbReference>
<dbReference type="DrugBank" id="DB00668">
    <property type="generic name" value="Epinephrine"/>
</dbReference>
<dbReference type="DrugBank" id="DB13952">
    <property type="generic name" value="Estradiol acetate"/>
</dbReference>
<dbReference type="DrugBank" id="DB13953">
    <property type="generic name" value="Estradiol benzoate"/>
</dbReference>
<dbReference type="DrugBank" id="DB13954">
    <property type="generic name" value="Estradiol cypionate"/>
</dbReference>
<dbReference type="DrugBank" id="DB13955">
    <property type="generic name" value="Estradiol dienanthate"/>
</dbReference>
<dbReference type="DrugBank" id="DB13956">
    <property type="generic name" value="Estradiol valerate"/>
</dbReference>
<dbReference type="DrugBank" id="DB00983">
    <property type="generic name" value="Formoterol"/>
</dbReference>
<dbReference type="DrugBank" id="DB01004">
    <property type="generic name" value="Ganciclovir"/>
</dbReference>
<dbReference type="DrugBank" id="DB00406">
    <property type="generic name" value="Gentian violet cation"/>
</dbReference>
<dbReference type="DrugBank" id="DB12141">
    <property type="generic name" value="Gilteritinib"/>
</dbReference>
<dbReference type="DrugBank" id="DB01018">
    <property type="generic name" value="Guanfacine"/>
</dbReference>
<dbReference type="DrugBank" id="DB00536">
    <property type="generic name" value="Guanidine"/>
</dbReference>
<dbReference type="DrugBank" id="DB05381">
    <property type="generic name" value="Histamine"/>
</dbReference>
<dbReference type="DrugBank" id="DB00619">
    <property type="generic name" value="Imatinib"/>
</dbReference>
<dbReference type="DrugBank" id="DB00224">
    <property type="generic name" value="Indinavir"/>
</dbReference>
<dbReference type="DrugBank" id="DB11886">
    <property type="generic name" value="Infigratinib"/>
</dbReference>
<dbReference type="DrugBank" id="DB00709">
    <property type="generic name" value="Lamivudine"/>
</dbReference>
<dbReference type="DrugBank" id="DB00555">
    <property type="generic name" value="Lamotrigine"/>
</dbReference>
<dbReference type="DrugBank" id="DB00448">
    <property type="generic name" value="Lansoprazole"/>
</dbReference>
<dbReference type="DrugBank" id="DB11732">
    <property type="generic name" value="Lasmiditan"/>
</dbReference>
<dbReference type="DrugBank" id="DB16216">
    <property type="generic name" value="Lazertinib"/>
</dbReference>
<dbReference type="DrugBank" id="DB01137">
    <property type="generic name" value="Levofloxacin"/>
</dbReference>
<dbReference type="DrugBank" id="DB08882">
    <property type="generic name" value="Linagliptin"/>
</dbReference>
<dbReference type="DrugBank" id="DB12674">
    <property type="generic name" value="Lurbinectedin"/>
</dbReference>
<dbReference type="DrugBank" id="DB00331">
    <property type="generic name" value="Metformin"/>
</dbReference>
<dbReference type="DrugBank" id="DB08893">
    <property type="generic name" value="Mirabegron"/>
</dbReference>
<dbReference type="DrugBank" id="DB12598">
    <property type="generic name" value="Nafamostat"/>
</dbReference>
<dbReference type="DrugBank" id="DB00220">
    <property type="generic name" value="Nelfinavir"/>
</dbReference>
<dbReference type="DrugBank" id="DB00238">
    <property type="generic name" value="Nevirapine"/>
</dbReference>
<dbReference type="DrugBank" id="DB00184">
    <property type="generic name" value="Nicotine"/>
</dbReference>
<dbReference type="DrugBank" id="DB09079">
    <property type="generic name" value="Nintedanib"/>
</dbReference>
<dbReference type="DrugBank" id="DB00368">
    <property type="generic name" value="Norepinephrine"/>
</dbReference>
<dbReference type="DrugBank" id="DB11837">
    <property type="generic name" value="Osilodrostat"/>
</dbReference>
<dbReference type="DrugBank" id="DB11697">
    <property type="generic name" value="Pacritinib"/>
</dbReference>
<dbReference type="DrugBank" id="DB09073">
    <property type="generic name" value="Palbociclib"/>
</dbReference>
<dbReference type="DrugBank" id="DB05467">
    <property type="generic name" value="Palovarotene"/>
</dbReference>
<dbReference type="DrugBank" id="DB01337">
    <property type="generic name" value="Pancuronium"/>
</dbReference>
<dbReference type="DrugBank" id="DB00914">
    <property type="generic name" value="Phenformin"/>
</dbReference>
<dbReference type="DrugBank" id="DB00925">
    <property type="generic name" value="Phenoxybenzamine"/>
</dbReference>
<dbReference type="DrugBank" id="DB01621">
    <property type="generic name" value="Pipotiazine"/>
</dbReference>
<dbReference type="DrugBank" id="DB11642">
    <property type="generic name" value="Pitolisant"/>
</dbReference>
<dbReference type="DrugBank" id="DB00413">
    <property type="generic name" value="Pramipexole"/>
</dbReference>
<dbReference type="DrugBank" id="DB00457">
    <property type="generic name" value="Prazosin"/>
</dbReference>
<dbReference type="DrugBank" id="DB01032">
    <property type="generic name" value="Probenecid"/>
</dbReference>
<dbReference type="DrugBank" id="DB01035">
    <property type="generic name" value="Procainamide"/>
</dbReference>
<dbReference type="DrugBank" id="DB00396">
    <property type="generic name" value="Progesterone"/>
</dbReference>
<dbReference type="DrugBank" id="DB00908">
    <property type="generic name" value="Quinidine"/>
</dbReference>
<dbReference type="DrugBank" id="DB00468">
    <property type="generic name" value="Quinine"/>
</dbReference>
<dbReference type="DrugBank" id="DB00863">
    <property type="generic name" value="Ranitidine"/>
</dbReference>
<dbReference type="DrugBank" id="DB00206">
    <property type="generic name" value="Reserpine"/>
</dbReference>
<dbReference type="DrugBank" id="DB18515">
    <property type="generic name" value="Revumenib"/>
</dbReference>
<dbReference type="DrugBank" id="DB00728">
    <property type="generic name" value="Rocuronium"/>
</dbReference>
<dbReference type="DrugBank" id="DB12332">
    <property type="generic name" value="Rucaparib"/>
</dbReference>
<dbReference type="DrugBank" id="DB00938">
    <property type="generic name" value="Salmeterol"/>
</dbReference>
<dbReference type="DrugBank" id="DB01232">
    <property type="generic name" value="Saquinavir"/>
</dbReference>
<dbReference type="DrugBank" id="DB19325">
    <property type="generic name" value="Sofpironium"/>
</dbReference>
<dbReference type="DrugBank" id="DB03566">
    <property type="generic name" value="Spermidine"/>
</dbReference>
<dbReference type="DrugBank" id="DB00127">
    <property type="generic name" value="Spermine"/>
</dbReference>
<dbReference type="DrugBank" id="DB00391">
    <property type="generic name" value="Sulpiride"/>
</dbReference>
<dbReference type="DrugBank" id="DB15133">
    <property type="generic name" value="Tepotinib"/>
</dbReference>
<dbReference type="DrugBank" id="DB08837">
    <property type="generic name" value="Tetraethylammonium"/>
</dbReference>
<dbReference type="DrugBank" id="DB00152">
    <property type="generic name" value="Thiamine"/>
</dbReference>
<dbReference type="DrugBank" id="DB01623">
    <property type="generic name" value="Thiothixene"/>
</dbReference>
<dbReference type="DrugBank" id="DB06137">
    <property type="generic name" value="Tirbanibulin"/>
</dbReference>
<dbReference type="DrugBank" id="DB01199">
    <property type="generic name" value="Tubocurarine"/>
</dbReference>
<dbReference type="DrugBank" id="DB09076">
    <property type="generic name" value="Umeclidinium"/>
</dbReference>
<dbReference type="DrugBank" id="DB00661">
    <property type="generic name" value="Verapamil"/>
</dbReference>
<dbReference type="DrugCentral" id="O15245"/>
<dbReference type="GuidetoPHARMACOLOGY" id="1019"/>
<dbReference type="TCDB" id="2.A.1.19.29">
    <property type="family name" value="the major facilitator superfamily (mfs)"/>
</dbReference>
<dbReference type="GlyCosmos" id="O15245">
    <property type="glycosylation" value="1 site, No reported glycans"/>
</dbReference>
<dbReference type="GlyGen" id="O15245">
    <property type="glycosylation" value="1 site"/>
</dbReference>
<dbReference type="iPTMnet" id="O15245"/>
<dbReference type="PhosphoSitePlus" id="O15245"/>
<dbReference type="BioMuta" id="SLC22A1"/>
<dbReference type="MassIVE" id="O15245"/>
<dbReference type="PaxDb" id="9606-ENSP00000355930"/>
<dbReference type="PeptideAtlas" id="O15245"/>
<dbReference type="ProteomicsDB" id="48536">
    <molecule id="O15245-1"/>
</dbReference>
<dbReference type="ProteomicsDB" id="48537">
    <molecule id="O15245-2"/>
</dbReference>
<dbReference type="ProteomicsDB" id="48538">
    <molecule id="O15245-3"/>
</dbReference>
<dbReference type="ProteomicsDB" id="48539">
    <molecule id="O15245-4"/>
</dbReference>
<dbReference type="Antibodypedia" id="33480">
    <property type="antibodies" value="287 antibodies from 33 providers"/>
</dbReference>
<dbReference type="DNASU" id="6580"/>
<dbReference type="Ensembl" id="ENST00000324965.8">
    <molecule id="O15245-2"/>
    <property type="protein sequence ID" value="ENSP00000318103.4"/>
    <property type="gene ID" value="ENSG00000175003.15"/>
</dbReference>
<dbReference type="Ensembl" id="ENST00000366963.9">
    <molecule id="O15245-1"/>
    <property type="protein sequence ID" value="ENSP00000355930.4"/>
    <property type="gene ID" value="ENSG00000175003.15"/>
</dbReference>
<dbReference type="Ensembl" id="ENST00000457470.6">
    <molecule id="O15245-3"/>
    <property type="protein sequence ID" value="ENSP00000409557.2"/>
    <property type="gene ID" value="ENSG00000175003.15"/>
</dbReference>
<dbReference type="Ensembl" id="ENST00000460902.2">
    <molecule id="O15245-4"/>
    <property type="protein sequence ID" value="ENSP00000439274.1"/>
    <property type="gene ID" value="ENSG00000175003.15"/>
</dbReference>
<dbReference type="GeneID" id="6580"/>
<dbReference type="KEGG" id="hsa:6580"/>
<dbReference type="MANE-Select" id="ENST00000366963.9">
    <property type="protein sequence ID" value="ENSP00000355930.4"/>
    <property type="RefSeq nucleotide sequence ID" value="NM_003057.3"/>
    <property type="RefSeq protein sequence ID" value="NP_003048.1"/>
</dbReference>
<dbReference type="UCSC" id="uc003qtc.4">
    <molecule id="O15245-1"/>
    <property type="organism name" value="human"/>
</dbReference>
<dbReference type="AGR" id="HGNC:10963"/>
<dbReference type="CTD" id="6580"/>
<dbReference type="DisGeNET" id="6580"/>
<dbReference type="GeneCards" id="SLC22A1"/>
<dbReference type="HGNC" id="HGNC:10963">
    <property type="gene designation" value="SLC22A1"/>
</dbReference>
<dbReference type="HPA" id="ENSG00000175003">
    <property type="expression patterns" value="Tissue enriched (liver)"/>
</dbReference>
<dbReference type="MIM" id="602607">
    <property type="type" value="gene"/>
</dbReference>
<dbReference type="neXtProt" id="NX_O15245"/>
<dbReference type="OpenTargets" id="ENSG00000175003"/>
<dbReference type="PharmGKB" id="PA329"/>
<dbReference type="VEuPathDB" id="HostDB:ENSG00000175003"/>
<dbReference type="eggNOG" id="KOG0255">
    <property type="taxonomic scope" value="Eukaryota"/>
</dbReference>
<dbReference type="GeneTree" id="ENSGT00940000162065"/>
<dbReference type="HOGENOM" id="CLU_001265_33_5_1"/>
<dbReference type="InParanoid" id="O15245"/>
<dbReference type="OMA" id="IMIFIPH"/>
<dbReference type="OrthoDB" id="5141738at2759"/>
<dbReference type="PAN-GO" id="O15245">
    <property type="GO annotations" value="2 GO annotations based on evolutionary models"/>
</dbReference>
<dbReference type="PhylomeDB" id="O15245"/>
<dbReference type="TreeFam" id="TF315847"/>
<dbReference type="PathwayCommons" id="O15245"/>
<dbReference type="Reactome" id="R-HSA-112311">
    <property type="pathway name" value="Neurotransmitter clearance"/>
</dbReference>
<dbReference type="Reactome" id="R-HSA-181430">
    <property type="pathway name" value="Norepinephrine Neurotransmitter Release Cycle"/>
</dbReference>
<dbReference type="Reactome" id="R-HSA-2161517">
    <property type="pathway name" value="Abacavir transmembrane transport"/>
</dbReference>
<dbReference type="Reactome" id="R-HSA-442660">
    <property type="pathway name" value="Na+/Cl- dependent neurotransmitter transporters"/>
</dbReference>
<dbReference type="Reactome" id="R-HSA-549127">
    <property type="pathway name" value="Organic cation transport"/>
</dbReference>
<dbReference type="Reactome" id="R-HSA-9793528">
    <property type="pathway name" value="Ciprofloxacin ADME"/>
</dbReference>
<dbReference type="SABIO-RK" id="O15245"/>
<dbReference type="SignaLink" id="O15245"/>
<dbReference type="BioGRID-ORCS" id="6580">
    <property type="hits" value="10 hits in 1148 CRISPR screens"/>
</dbReference>
<dbReference type="GeneWiki" id="SLC22A1"/>
<dbReference type="GenomeRNAi" id="6580"/>
<dbReference type="Pharos" id="O15245">
    <property type="development level" value="Tchem"/>
</dbReference>
<dbReference type="PRO" id="PR:O15245"/>
<dbReference type="Proteomes" id="UP000005640">
    <property type="component" value="Chromosome 6"/>
</dbReference>
<dbReference type="RNAct" id="O15245">
    <property type="molecule type" value="protein"/>
</dbReference>
<dbReference type="Bgee" id="ENSG00000175003">
    <property type="expression patterns" value="Expressed in right lobe of liver and 100 other cell types or tissues"/>
</dbReference>
<dbReference type="ExpressionAtlas" id="O15245">
    <property type="expression patterns" value="baseline and differential"/>
</dbReference>
<dbReference type="GO" id="GO:0016324">
    <property type="term" value="C:apical plasma membrane"/>
    <property type="evidence" value="ECO:0000314"/>
    <property type="project" value="UniProtKB"/>
</dbReference>
<dbReference type="GO" id="GO:0009925">
    <property type="term" value="C:basal plasma membrane"/>
    <property type="evidence" value="ECO:0000314"/>
    <property type="project" value="UniProtKB"/>
</dbReference>
<dbReference type="GO" id="GO:0016323">
    <property type="term" value="C:basolateral plasma membrane"/>
    <property type="evidence" value="ECO:0000314"/>
    <property type="project" value="UniProtKB"/>
</dbReference>
<dbReference type="GO" id="GO:0016328">
    <property type="term" value="C:lateral plasma membrane"/>
    <property type="evidence" value="ECO:0000314"/>
    <property type="project" value="UniProtKB"/>
</dbReference>
<dbReference type="GO" id="GO:0016020">
    <property type="term" value="C:membrane"/>
    <property type="evidence" value="ECO:0000304"/>
    <property type="project" value="UniProtKB"/>
</dbReference>
<dbReference type="GO" id="GO:0005886">
    <property type="term" value="C:plasma membrane"/>
    <property type="evidence" value="ECO:0000304"/>
    <property type="project" value="UniProtKB"/>
</dbReference>
<dbReference type="GO" id="GO:0098793">
    <property type="term" value="C:presynapse"/>
    <property type="evidence" value="ECO:0007669"/>
    <property type="project" value="GOC"/>
</dbReference>
<dbReference type="GO" id="GO:1901235">
    <property type="term" value="F:(R)-carnitine transmembrane transporter activity"/>
    <property type="evidence" value="ECO:0007669"/>
    <property type="project" value="Ensembl"/>
</dbReference>
<dbReference type="GO" id="GO:0005277">
    <property type="term" value="F:acetylcholine transmembrane transporter activity"/>
    <property type="evidence" value="ECO:0000314"/>
    <property type="project" value="UniProtKB"/>
</dbReference>
<dbReference type="GO" id="GO:0005330">
    <property type="term" value="F:dopamine:sodium symporter activity"/>
    <property type="evidence" value="ECO:0007669"/>
    <property type="project" value="Ensembl"/>
</dbReference>
<dbReference type="GO" id="GO:0042802">
    <property type="term" value="F:identical protein binding"/>
    <property type="evidence" value="ECO:0007669"/>
    <property type="project" value="Ensembl"/>
</dbReference>
<dbReference type="GO" id="GO:0008504">
    <property type="term" value="F:monoamine transmembrane transporter activity"/>
    <property type="evidence" value="ECO:0000314"/>
    <property type="project" value="UniProtKB"/>
</dbReference>
<dbReference type="GO" id="GO:0005326">
    <property type="term" value="F:neurotransmitter transmembrane transporter activity"/>
    <property type="evidence" value="ECO:0000314"/>
    <property type="project" value="UniProtKB"/>
</dbReference>
<dbReference type="GO" id="GO:0005334">
    <property type="term" value="F:norepinephrine:sodium symporter activity"/>
    <property type="evidence" value="ECO:0007669"/>
    <property type="project" value="Ensembl"/>
</dbReference>
<dbReference type="GO" id="GO:0008514">
    <property type="term" value="F:organic anion transmembrane transporter activity"/>
    <property type="evidence" value="ECO:0000314"/>
    <property type="project" value="UniProtKB"/>
</dbReference>
<dbReference type="GO" id="GO:0015101">
    <property type="term" value="F:organic cation transmembrane transporter activity"/>
    <property type="evidence" value="ECO:0000314"/>
    <property type="project" value="UniProtKB"/>
</dbReference>
<dbReference type="GO" id="GO:0015132">
    <property type="term" value="F:prostaglandin transmembrane transporter activity"/>
    <property type="evidence" value="ECO:0000314"/>
    <property type="project" value="UniProtKB"/>
</dbReference>
<dbReference type="GO" id="GO:0015489">
    <property type="term" value="F:putrescine transmembrane transporter activity"/>
    <property type="evidence" value="ECO:0000314"/>
    <property type="project" value="UniProtKB"/>
</dbReference>
<dbReference type="GO" id="GO:0015214">
    <property type="term" value="F:pyrimidine nucleoside transmembrane transporter activity"/>
    <property type="evidence" value="ECO:0000315"/>
    <property type="project" value="ARUK-UCL"/>
</dbReference>
<dbReference type="GO" id="GO:0015651">
    <property type="term" value="F:quaternary ammonium group transmembrane transporter activity"/>
    <property type="evidence" value="ECO:0000314"/>
    <property type="project" value="ARUK-UCL"/>
</dbReference>
<dbReference type="GO" id="GO:0015606">
    <property type="term" value="F:spermidine transmembrane transporter activity"/>
    <property type="evidence" value="ECO:0000250"/>
    <property type="project" value="UniProtKB"/>
</dbReference>
<dbReference type="GO" id="GO:0015234">
    <property type="term" value="F:thiamine transmembrane transporter activity"/>
    <property type="evidence" value="ECO:0007669"/>
    <property type="project" value="Ensembl"/>
</dbReference>
<dbReference type="GO" id="GO:0019534">
    <property type="term" value="F:toxin transmembrane transporter activity"/>
    <property type="evidence" value="ECO:0000314"/>
    <property type="project" value="ARUK-UCL"/>
</dbReference>
<dbReference type="GO" id="GO:0042910">
    <property type="term" value="F:xenobiotic transmembrane transporter activity"/>
    <property type="evidence" value="ECO:0000314"/>
    <property type="project" value="UniProtKB"/>
</dbReference>
<dbReference type="GO" id="GO:0015870">
    <property type="term" value="P:acetylcholine transport"/>
    <property type="evidence" value="ECO:0000314"/>
    <property type="project" value="UniProtKB"/>
</dbReference>
<dbReference type="GO" id="GO:1990748">
    <property type="term" value="P:cellular detoxification"/>
    <property type="evidence" value="ECO:0000314"/>
    <property type="project" value="ARUK-UCL"/>
</dbReference>
<dbReference type="GO" id="GO:0015872">
    <property type="term" value="P:dopamine transport"/>
    <property type="evidence" value="ECO:0000314"/>
    <property type="project" value="UniProtKB"/>
</dbReference>
<dbReference type="GO" id="GO:0090494">
    <property type="term" value="P:dopamine uptake"/>
    <property type="evidence" value="ECO:0000314"/>
    <property type="project" value="ARUK-UCL"/>
</dbReference>
<dbReference type="GO" id="GO:0048241">
    <property type="term" value="P:epinephrine transport"/>
    <property type="evidence" value="ECO:0000314"/>
    <property type="project" value="UniProtKB"/>
</dbReference>
<dbReference type="GO" id="GO:0010248">
    <property type="term" value="P:establishment or maintenance of transmembrane electrochemical gradient"/>
    <property type="evidence" value="ECO:0007669"/>
    <property type="project" value="Ensembl"/>
</dbReference>
<dbReference type="GO" id="GO:0072237">
    <property type="term" value="P:metanephric proximal tubule development"/>
    <property type="evidence" value="ECO:0007669"/>
    <property type="project" value="Ensembl"/>
</dbReference>
<dbReference type="GO" id="GO:0015844">
    <property type="term" value="P:monoamine transport"/>
    <property type="evidence" value="ECO:0000314"/>
    <property type="project" value="UniProtKB"/>
</dbReference>
<dbReference type="GO" id="GO:0006836">
    <property type="term" value="P:neurotransmitter transport"/>
    <property type="evidence" value="ECO:0000314"/>
    <property type="project" value="ARUK-UCL"/>
</dbReference>
<dbReference type="GO" id="GO:0015874">
    <property type="term" value="P:norepinephrine transport"/>
    <property type="evidence" value="ECO:0000314"/>
    <property type="project" value="ARUK-UCL"/>
</dbReference>
<dbReference type="GO" id="GO:1902616">
    <property type="term" value="P:O-acyl-L-carnitine transmembrane transport"/>
    <property type="evidence" value="ECO:0007669"/>
    <property type="project" value="Ensembl"/>
</dbReference>
<dbReference type="GO" id="GO:0015695">
    <property type="term" value="P:organic cation transport"/>
    <property type="evidence" value="ECO:0000314"/>
    <property type="project" value="ARUK-UCL"/>
</dbReference>
<dbReference type="GO" id="GO:0015732">
    <property type="term" value="P:prostaglandin transport"/>
    <property type="evidence" value="ECO:0000314"/>
    <property type="project" value="UniProtKB"/>
</dbReference>
<dbReference type="GO" id="GO:0072530">
    <property type="term" value="P:purine-containing compound transmembrane transport"/>
    <property type="evidence" value="ECO:0000304"/>
    <property type="project" value="Reactome"/>
</dbReference>
<dbReference type="GO" id="GO:0015847">
    <property type="term" value="P:putrescine transport"/>
    <property type="evidence" value="ECO:0000314"/>
    <property type="project" value="UniProtKB"/>
</dbReference>
<dbReference type="GO" id="GO:0015697">
    <property type="term" value="P:quaternary ammonium group transport"/>
    <property type="evidence" value="ECO:0000314"/>
    <property type="project" value="ARUK-UCL"/>
</dbReference>
<dbReference type="GO" id="GO:0006837">
    <property type="term" value="P:serotonin transport"/>
    <property type="evidence" value="ECO:0000314"/>
    <property type="project" value="UniProtKB"/>
</dbReference>
<dbReference type="GO" id="GO:0051610">
    <property type="term" value="P:serotonin uptake"/>
    <property type="evidence" value="ECO:0000314"/>
    <property type="project" value="ARUK-UCL"/>
</dbReference>
<dbReference type="GO" id="GO:0015848">
    <property type="term" value="P:spermidine transport"/>
    <property type="evidence" value="ECO:0000250"/>
    <property type="project" value="UniProtKB"/>
</dbReference>
<dbReference type="GO" id="GO:0071934">
    <property type="term" value="P:thiamine transmembrane transport"/>
    <property type="evidence" value="ECO:0000314"/>
    <property type="project" value="UniProtKB"/>
</dbReference>
<dbReference type="GO" id="GO:0015888">
    <property type="term" value="P:thiamine transport"/>
    <property type="evidence" value="ECO:0000314"/>
    <property type="project" value="UniProtKB"/>
</dbReference>
<dbReference type="GO" id="GO:0150104">
    <property type="term" value="P:transport across blood-brain barrier"/>
    <property type="evidence" value="ECO:0000303"/>
    <property type="project" value="ARUK-UCL"/>
</dbReference>
<dbReference type="GO" id="GO:0006805">
    <property type="term" value="P:xenobiotic metabolic process"/>
    <property type="evidence" value="ECO:0000304"/>
    <property type="project" value="Reactome"/>
</dbReference>
<dbReference type="GO" id="GO:0042908">
    <property type="term" value="P:xenobiotic transport"/>
    <property type="evidence" value="ECO:0000314"/>
    <property type="project" value="UniProtKB"/>
</dbReference>
<dbReference type="GO" id="GO:1990962">
    <property type="term" value="P:xenobiotic transport across blood-brain barrier"/>
    <property type="evidence" value="ECO:0000303"/>
    <property type="project" value="ARUK-UCL"/>
</dbReference>
<dbReference type="CDD" id="cd17379">
    <property type="entry name" value="MFS_SLC22A1_2_3"/>
    <property type="match status" value="1"/>
</dbReference>
<dbReference type="FunFam" id="1.20.1250.20:FF:000148">
    <property type="entry name" value="Solute carrier family 22 member 2"/>
    <property type="match status" value="1"/>
</dbReference>
<dbReference type="Gene3D" id="1.20.1250.20">
    <property type="entry name" value="MFS general substrate transporter like domains"/>
    <property type="match status" value="1"/>
</dbReference>
<dbReference type="InterPro" id="IPR020846">
    <property type="entry name" value="MFS_dom"/>
</dbReference>
<dbReference type="InterPro" id="IPR005828">
    <property type="entry name" value="MFS_sugar_transport-like"/>
</dbReference>
<dbReference type="InterPro" id="IPR036259">
    <property type="entry name" value="MFS_trans_sf"/>
</dbReference>
<dbReference type="InterPro" id="IPR004749">
    <property type="entry name" value="Orgcat_transp/SVOP"/>
</dbReference>
<dbReference type="InterPro" id="IPR005829">
    <property type="entry name" value="Sugar_transporter_CS"/>
</dbReference>
<dbReference type="NCBIfam" id="TIGR00898">
    <property type="entry name" value="2A0119"/>
    <property type="match status" value="1"/>
</dbReference>
<dbReference type="PANTHER" id="PTHR24064">
    <property type="entry name" value="SOLUTE CARRIER FAMILY 22 MEMBER"/>
    <property type="match status" value="1"/>
</dbReference>
<dbReference type="Pfam" id="PF00083">
    <property type="entry name" value="Sugar_tr"/>
    <property type="match status" value="1"/>
</dbReference>
<dbReference type="SUPFAM" id="SSF103473">
    <property type="entry name" value="MFS general substrate transporter"/>
    <property type="match status" value="1"/>
</dbReference>
<dbReference type="PROSITE" id="PS50850">
    <property type="entry name" value="MFS"/>
    <property type="match status" value="1"/>
</dbReference>
<dbReference type="PROSITE" id="PS00216">
    <property type="entry name" value="SUGAR_TRANSPORT_1"/>
    <property type="match status" value="1"/>
</dbReference>
<accession>O15245</accession>
<accession>A6NFF3</accession>
<accession>A8K1H2</accession>
<accession>C9JSU6</accession>
<accession>O15395</accession>
<accession>Q9NQD4</accession>
<gene>
    <name evidence="40" type="primary">SLC22A1</name>
    <name type="synonym">OCT1</name>
</gene>
<feature type="chain" id="PRO_0000333875" description="Solute carrier family 22 member 1">
    <location>
        <begin position="1"/>
        <end position="554"/>
    </location>
</feature>
<feature type="topological domain" description="Cytoplasmic" evidence="3">
    <location>
        <begin position="1"/>
        <end position="21"/>
    </location>
</feature>
<feature type="transmembrane region" description="Helical" evidence="3">
    <location>
        <begin position="22"/>
        <end position="42"/>
    </location>
</feature>
<feature type="topological domain" description="Extracellular" evidence="3">
    <location>
        <begin position="43"/>
        <end position="149"/>
    </location>
</feature>
<feature type="transmembrane region" description="Helical" evidence="3">
    <location>
        <begin position="150"/>
        <end position="170"/>
    </location>
</feature>
<feature type="topological domain" description="Cytoplasmic" evidence="3">
    <location>
        <begin position="171"/>
        <end position="176"/>
    </location>
</feature>
<feature type="transmembrane region" description="Helical" evidence="3">
    <location>
        <begin position="177"/>
        <end position="197"/>
    </location>
</feature>
<feature type="topological domain" description="Extracellular" evidence="3">
    <location>
        <begin position="198"/>
        <end position="206"/>
    </location>
</feature>
<feature type="transmembrane region" description="Helical" evidence="3">
    <location>
        <begin position="207"/>
        <end position="229"/>
    </location>
</feature>
<feature type="topological domain" description="Cytoplasmic" evidence="3">
    <location>
        <begin position="230"/>
        <end position="235"/>
    </location>
</feature>
<feature type="transmembrane region" description="Helical" evidence="3">
    <location>
        <begin position="236"/>
        <end position="256"/>
    </location>
</feature>
<feature type="topological domain" description="Extracellular" evidence="3">
    <location>
        <begin position="257"/>
        <end position="262"/>
    </location>
</feature>
<feature type="transmembrane region" description="Helical" evidence="3">
    <location>
        <begin position="263"/>
        <end position="283"/>
    </location>
</feature>
<feature type="topological domain" description="Cytoplasmic" evidence="3">
    <location>
        <begin position="284"/>
        <end position="347"/>
    </location>
</feature>
<feature type="transmembrane region" description="Helical" evidence="3">
    <location>
        <begin position="348"/>
        <end position="368"/>
    </location>
</feature>
<feature type="topological domain" description="Extracellular" evidence="3">
    <location>
        <begin position="369"/>
        <end position="376"/>
    </location>
</feature>
<feature type="transmembrane region" description="Helical" evidence="3">
    <location>
        <begin position="377"/>
        <end position="397"/>
    </location>
</feature>
<feature type="topological domain" description="Cytoplasmic" evidence="3">
    <location>
        <begin position="398"/>
        <end position="402"/>
    </location>
</feature>
<feature type="transmembrane region" description="Helical" evidence="3">
    <location>
        <begin position="403"/>
        <end position="423"/>
    </location>
</feature>
<feature type="topological domain" description="Extracellular" evidence="3">
    <location>
        <begin position="424"/>
        <end position="431"/>
    </location>
</feature>
<feature type="transmembrane region" description="Helical" evidence="3">
    <location>
        <begin position="432"/>
        <end position="452"/>
    </location>
</feature>
<feature type="topological domain" description="Cytoplasmic" evidence="3">
    <location>
        <begin position="453"/>
        <end position="464"/>
    </location>
</feature>
<feature type="transmembrane region" description="Helical" evidence="3">
    <location>
        <begin position="465"/>
        <end position="485"/>
    </location>
</feature>
<feature type="topological domain" description="Extracellular" evidence="3">
    <location>
        <begin position="486"/>
        <end position="492"/>
    </location>
</feature>
<feature type="transmembrane region" description="Helical" evidence="3">
    <location>
        <begin position="493"/>
        <end position="513"/>
    </location>
</feature>
<feature type="topological domain" description="Cytoplasmic" evidence="3">
    <location>
        <begin position="514"/>
        <end position="554"/>
    </location>
</feature>
<feature type="short sequence motif" description="Proline-rich sequence" evidence="38">
    <location>
        <begin position="283"/>
        <end position="287"/>
    </location>
</feature>
<feature type="modified residue" description="Phosphoserine" evidence="1">
    <location>
        <position position="333"/>
    </location>
</feature>
<feature type="modified residue" description="Phosphothreonine" evidence="41">
    <location>
        <position position="541"/>
    </location>
</feature>
<feature type="glycosylation site" description="N-linked (GlcNAc...) asparagine" evidence="3">
    <location>
        <position position="71"/>
    </location>
</feature>
<feature type="splice variant" id="VSP_033587" description="In isoform 4." evidence="37">
    <location>
        <begin position="354"/>
        <end position="554"/>
    </location>
</feature>
<feature type="splice variant" id="VSP_033588" description="In isoform 3." evidence="37">
    <location>
        <begin position="462"/>
        <end position="532"/>
    </location>
</feature>
<feature type="splice variant" id="VSP_033589" description="In isoform 2." evidence="37">
    <original>RNLGVMVCSSLCDIGGIITPFIVFRLREVWQALPLILFAVLGLLA</original>
    <variation>SGVGPACRGSDATSSRDQGGRFARDHEGRREPWEKSKAQRKHDLP</variation>
    <location>
        <begin position="462"/>
        <end position="506"/>
    </location>
</feature>
<feature type="splice variant" id="VSP_033590" description="In isoform 2." evidence="37">
    <location>
        <begin position="507"/>
        <end position="554"/>
    </location>
</feature>
<feature type="sequence variant" id="VAR_043319" description="Exclusively found in the African American population; increased MPP(+) uptake when associated with V-408; dbSNP:rs34447885." evidence="8">
    <original>S</original>
    <variation>F</variation>
    <location>
        <position position="14"/>
    </location>
</feature>
<feature type="sequence variant" id="VAR_043320" description="In dbSNP:rs2297373." evidence="13">
    <original>F</original>
    <variation>L</variation>
    <location>
        <position position="41"/>
    </location>
</feature>
<feature type="sequence variant" id="VAR_043321" description="Affects transporter activity; reduction of MPP(+) uptake; reduction of serum O-isobutanoyl-(R)-carnitine levels; reduction of MPP(+) uptake when associated with V-408; dbSNP:rs12208357." evidence="7 8 28">
    <original>R</original>
    <variation>C</variation>
    <location>
        <position position="61"/>
    </location>
</feature>
<feature type="sequence variant" id="VAR_043322" description="No changes in MPP(+) uptake; when associated with V-408; dbSNP:rs35546288." evidence="8">
    <original>L</original>
    <variation>F</variation>
    <location>
        <position position="85"/>
    </location>
</feature>
<feature type="sequence variant" id="VAR_043323" description="Affects transporter activity; reduction of MPP(+), serotonin and TEA uptake; dbSNP:rs55918055." evidence="7">
    <original>C</original>
    <variation>R</variation>
    <location>
        <position position="88"/>
    </location>
</feature>
<feature type="sequence variant" id="VAR_043324" description="No changes in both MPP(+) and TEA uptake; abolishes MPP(+) uptake when associated with S-401; largely localized to the plasma membrane; dbSNP:rs683369." evidence="7 8 9 10 12 13 33">
    <original>L</original>
    <variation>F</variation>
    <location>
        <position position="160"/>
    </location>
</feature>
<feature type="sequence variant" id="VAR_043325" description="No changes in MPP(+) uptake; dbSNP:rs34104736." evidence="8">
    <original>S</original>
    <variation>L</variation>
    <location>
        <position position="189"/>
    </location>
</feature>
<feature type="sequence variant" id="VAR_043326" description="Affects transporter activity; reduction of MPP(+) uptake when associated with V-408; dbSNP:rs36103319." evidence="8">
    <original>G</original>
    <variation>V</variation>
    <location>
        <position position="220"/>
    </location>
</feature>
<feature type="sequence variant" id="VAR_043327" description="In dbSNP:rs4646277." evidence="9">
    <original>P</original>
    <variation>L</variation>
    <location>
        <position position="283"/>
    </location>
</feature>
<feature type="sequence variant" id="VAR_043328" description="In dbSNP:rs4646278." evidence="9">
    <original>R</original>
    <variation>G</variation>
    <location>
        <position position="287"/>
    </location>
</feature>
<feature type="sequence variant" id="VAR_043329" description="Affects transporter activity; reduction of TEA uptake; reduction o MPP(+) uptake when associated with V-408; largely localized to the plasma membrane; dbSNP:rs2282143." evidence="8 9 13">
    <original>P</original>
    <variation>L</variation>
    <location>
        <position position="341"/>
    </location>
</feature>
<feature type="sequence variant" id="VAR_043330" description="No changes in MPP(+) uptake when associated with V-408; dbSNP:rs34205214." evidence="8">
    <original>R</original>
    <variation>H</variation>
    <location>
        <position position="342"/>
    </location>
</feature>
<feature type="sequence variant" id="VAR_043331" description="Affects transporter activity; reduction of MPP(+), serotonin and TEA uptake; no MPP(+) uptake when associated with L-160; dbSNP:rs34130495." evidence="7 8">
    <original>G</original>
    <variation>S</variation>
    <location>
        <position position="401"/>
    </location>
</feature>
<feature type="sequence variant" id="VAR_043332" description="Does not affect transporter activity; no changes in MPP(+) uptake when associated with F-14; no changes in MPP(+) uptake when associated with F-85; no changes in MPP(+) uptake when associated with L-189; no changes in MPP(+) uptake when associated with H-342; no changes in MPP(+) uptake when associated with M-420 del; no changes in MPP(+) uptake when associated with I-440; no changes in MPP(+) uptake when associated with I-461; no changes in MPP(+) uptake when associated with M-488; reduction of MPP uptake when associated with C-61; no MPP(+) uptake when associated with V-220; reduction of MPP(+) uptake when associated with L-341; no MPP(+) uptake when associated with S-401; no MPP(+) uptake when associated with R-465; dbSNP:rs628031." evidence="8 10 13">
    <original>M</original>
    <variation>V</variation>
    <location>
        <position position="408"/>
    </location>
</feature>
<feature type="sequence variant" id="VAR_043333" description="Reduction of serum O-isobutanoyl-(R)-carnitine levels; no change in MPP(+) uptake; no changes in MPP(+) uptake when associated with V-408; dbSNP:rs72552763." evidence="7 8 10 28">
    <location>
        <position position="420"/>
    </location>
</feature>
<feature type="sequence variant" id="VAR_043334" description="In dbSNP:rs35956182." evidence="8">
    <original>M</original>
    <variation>I</variation>
    <location>
        <position position="440"/>
    </location>
</feature>
<feature type="sequence variant" id="VAR_043335" description="No changes in MPP(+) uptake when associated with V-408; dbSNP:rs34295611." evidence="8">
    <original>V</original>
    <variation>I</variation>
    <location>
        <position position="461"/>
    </location>
</feature>
<feature type="sequence variant" id="VAR_043336" description="Reduction of the localization to the basolateral membrane; no MPP(+) uptake when associated with V-408; dbSNP:rs34059508." evidence="8 10">
    <original>G</original>
    <variation>R</variation>
    <location>
        <position position="465"/>
    </location>
</feature>
<feature type="sequence variant" id="VAR_043337" description="No changes in MPP(+) uptake when associated with V-408; dbSNP:rs35270274." evidence="8">
    <original>R</original>
    <variation>M</variation>
    <location>
        <position position="488"/>
    </location>
</feature>
<feature type="mutagenesis site" description="No change in fenoterol uptake. No change in trospium uptake. No change in terbutaline uptake." evidence="31">
    <original>I</original>
    <variation>L</variation>
    <location>
        <position position="24"/>
    </location>
</feature>
<feature type="mutagenesis site" description="No change in fenoterol uptake. No change in trospium uptake. No change in terbutaline uptake." evidence="31">
    <original>L</original>
    <variation>I</variation>
    <location>
        <position position="28"/>
    </location>
</feature>
<feature type="mutagenesis site" description="No change in fenoterol uptake. No change in trospium uptake. No change in terbutaline uptake." evidence="31">
    <original>A</original>
    <variation>S</variation>
    <location>
        <position position="31"/>
    </location>
</feature>
<feature type="mutagenesis site" description="No change in fenoterol uptake. Decreased trospium uptake. Decreased trospium affinity." evidence="31">
    <original>F</original>
    <variation>L</variation>
    <location>
        <position position="32"/>
    </location>
</feature>
<feature type="mutagenesis site" description="Increased fenoterol uptake. Increased fenoterol affinity. No change in trospium uptake. No change in terbutaline uptake. No change in terbutaline affinity." evidence="31">
    <original>C</original>
    <variation>Y</variation>
    <location>
        <position position="36"/>
    </location>
</feature>
<feature type="mutagenesis site" description="Decreased TEA uptake." evidence="27">
    <original>Y</original>
    <variation>F</variation>
    <location>
        <position position="240"/>
    </location>
</feature>
<feature type="mutagenesis site" description="Decreased TEA uptake." evidence="27">
    <original>P</original>
    <variation>A</variation>
    <location>
        <position position="283"/>
    </location>
</feature>
<feature type="mutagenesis site" description="Decreased TEA uptake." evidence="27">
    <original>Y</original>
    <variation>F</variation>
    <location>
        <position position="361"/>
    </location>
</feature>
<feature type="mutagenesis site" description="Decreased TEA uptake." evidence="27">
    <original>Y</original>
    <variation>F</variation>
    <location>
        <position position="376"/>
    </location>
</feature>
<feature type="mutagenesis site" description="No changes in MPP(+) uptake." evidence="8">
    <original>G</original>
    <variation>A</variation>
    <location>
        <position position="465"/>
    </location>
</feature>
<feature type="helix" evidence="43">
    <location>
        <begin position="4"/>
        <end position="11"/>
    </location>
</feature>
<feature type="helix" evidence="45">
    <location>
        <begin position="20"/>
        <end position="30"/>
    </location>
</feature>
<feature type="helix" evidence="45">
    <location>
        <begin position="33"/>
        <end position="37"/>
    </location>
</feature>
<feature type="helix" evidence="45">
    <location>
        <begin position="39"/>
        <end position="42"/>
    </location>
</feature>
<feature type="strand" evidence="45">
    <location>
        <begin position="48"/>
        <end position="50"/>
    </location>
</feature>
<feature type="helix" evidence="45">
    <location>
        <begin position="55"/>
        <end position="62"/>
    </location>
</feature>
<feature type="helix" evidence="45">
    <location>
        <begin position="66"/>
        <end position="73"/>
    </location>
</feature>
<feature type="turn" evidence="43">
    <location>
        <begin position="80"/>
        <end position="82"/>
    </location>
</feature>
<feature type="helix" evidence="45">
    <location>
        <begin position="84"/>
        <end position="87"/>
    </location>
</feature>
<feature type="strand" evidence="47">
    <location>
        <begin position="89"/>
        <end position="91"/>
    </location>
</feature>
<feature type="strand" evidence="44">
    <location>
        <begin position="95"/>
        <end position="98"/>
    </location>
</feature>
<feature type="strand" evidence="43">
    <location>
        <begin position="102"/>
        <end position="104"/>
    </location>
</feature>
<feature type="helix" evidence="45">
    <location>
        <begin position="105"/>
        <end position="108"/>
    </location>
</feature>
<feature type="helix" evidence="45">
    <location>
        <begin position="113"/>
        <end position="115"/>
    </location>
</feature>
<feature type="strand" evidence="42">
    <location>
        <begin position="118"/>
        <end position="120"/>
    </location>
</feature>
<feature type="strand" evidence="45">
    <location>
        <begin position="125"/>
        <end position="127"/>
    </location>
</feature>
<feature type="strand" evidence="46">
    <location>
        <begin position="130"/>
        <end position="132"/>
    </location>
</feature>
<feature type="helix" evidence="45">
    <location>
        <begin position="134"/>
        <end position="138"/>
    </location>
</feature>
<feature type="helix" evidence="45">
    <location>
        <begin position="142"/>
        <end position="146"/>
    </location>
</feature>
<feature type="helix" evidence="45">
    <location>
        <begin position="147"/>
        <end position="172"/>
    </location>
</feature>
<feature type="helix" evidence="45">
    <location>
        <begin position="175"/>
        <end position="193"/>
    </location>
</feature>
<feature type="helix" evidence="45">
    <location>
        <begin position="199"/>
        <end position="227"/>
    </location>
</feature>
<feature type="turn" evidence="45">
    <location>
        <begin position="230"/>
        <end position="232"/>
    </location>
</feature>
<feature type="helix" evidence="45">
    <location>
        <begin position="233"/>
        <end position="257"/>
    </location>
</feature>
<feature type="helix" evidence="45">
    <location>
        <begin position="261"/>
        <end position="278"/>
    </location>
</feature>
<feature type="helix" evidence="43">
    <location>
        <begin position="286"/>
        <end position="290"/>
    </location>
</feature>
<feature type="turn" evidence="43">
    <location>
        <begin position="291"/>
        <end position="293"/>
    </location>
</feature>
<feature type="helix" evidence="43">
    <location>
        <begin position="295"/>
        <end position="309"/>
    </location>
</feature>
<feature type="helix" evidence="43">
    <location>
        <begin position="315"/>
        <end position="317"/>
    </location>
</feature>
<feature type="helix" evidence="45">
    <location>
        <begin position="334"/>
        <end position="338"/>
    </location>
</feature>
<feature type="helix" evidence="45">
    <location>
        <begin position="341"/>
        <end position="371"/>
    </location>
</feature>
<feature type="helix" evidence="45">
    <location>
        <begin position="375"/>
        <end position="384"/>
    </location>
</feature>
<feature type="helix" evidence="45">
    <location>
        <begin position="386"/>
        <end position="399"/>
    </location>
</feature>
<feature type="helix" evidence="45">
    <location>
        <begin position="403"/>
        <end position="419"/>
    </location>
</feature>
<feature type="turn" evidence="45">
    <location>
        <begin position="420"/>
        <end position="422"/>
    </location>
</feature>
<feature type="strand" evidence="43">
    <location>
        <begin position="425"/>
        <end position="427"/>
    </location>
</feature>
<feature type="helix" evidence="45">
    <location>
        <begin position="428"/>
        <end position="455"/>
    </location>
</feature>
<feature type="helix" evidence="45">
    <location>
        <begin position="459"/>
        <end position="470"/>
    </location>
</feature>
<feature type="helix" evidence="45">
    <location>
        <begin position="472"/>
        <end position="486"/>
    </location>
</feature>
<feature type="helix" evidence="45">
    <location>
        <begin position="487"/>
        <end position="489"/>
    </location>
</feature>
<feature type="helix" evidence="45">
    <location>
        <begin position="494"/>
        <end position="510"/>
    </location>
</feature>
<feature type="helix" evidence="43">
    <location>
        <begin position="525"/>
        <end position="529"/>
    </location>
</feature>
<name>S22A1_HUMAN</name>
<reference key="1">
    <citation type="journal article" date="1997" name="DNA Cell Biol.">
        <title>Cloning and characterization of two human polyspecific organic cation transporters.</title>
        <authorList>
            <person name="Gorboulev V."/>
            <person name="Ulzheimer J.C."/>
            <person name="Akhoundova A."/>
            <person name="Ulzheimer-Teuber I."/>
            <person name="Karbach U."/>
            <person name="Quester S."/>
            <person name="Baumann C."/>
            <person name="Lang F."/>
            <person name="Busch A.E."/>
            <person name="Koepsell H."/>
        </authorList>
    </citation>
    <scope>NUCLEOTIDE SEQUENCE [MRNA] (ISOFORM 1)</scope>
    <scope>FUNCTION</scope>
    <scope>TRANSPORTER ACTIVITY</scope>
    <scope>TISSUE SPECIFICITY</scope>
    <scope>MISCELLANEOUS</scope>
    <scope>VARIANT PHE-160</scope>
    <source>
        <tissue>Liver</tissue>
    </source>
</reference>
<reference key="2">
    <citation type="journal article" date="1997" name="Mol. Pharmacol.">
        <title>Cloning and functional expression of a human liver organic cation transporter.</title>
        <authorList>
            <person name="Zhang L."/>
            <person name="Dresser M.J."/>
            <person name="Gray A.T."/>
            <person name="Yost S.C."/>
            <person name="Terashita S."/>
            <person name="Giacomini K.M."/>
        </authorList>
    </citation>
    <scope>NUCLEOTIDE SEQUENCE [MRNA] (ISOFORM 1)</scope>
    <scope>FUNCTION</scope>
    <scope>TISSUE SPECIFICITY</scope>
    <scope>MISCELLANEOUS</scope>
</reference>
<reference key="3">
    <citation type="journal article" date="1999" name="Ann. Hum. Genet.">
        <title>Molecular cloning, functional characterization and genomic organization of four alternatively spliced isoforms of the human organic cation transporter 1 (hOCT1/SLC22A1).</title>
        <authorList>
            <person name="Hayer M."/>
            <person name="Boenisch H."/>
            <person name="Bruess M."/>
        </authorList>
    </citation>
    <scope>NUCLEOTIDE SEQUENCE [GENOMIC DNA] (ISOFORM 1)</scope>
    <scope>FUNCTION</scope>
    <scope>BIOPHYSICOCHEMICAL PROPERTIES</scope>
    <scope>TISSUE SPECIFICITY</scope>
    <scope>MISCELLANEOUS</scope>
    <scope>ALTERNATIVE SPLICING (ISOFORMS 1; 2; 3 AND 4)</scope>
</reference>
<reference key="4">
    <citation type="journal article" date="2000" name="Ann. Hum. Genet.">
        <authorList>
            <person name="Hayer M."/>
            <person name="Bonisch H."/>
            <person name="Bruss M."/>
        </authorList>
    </citation>
    <scope>ERRATUM OF PUBMED:11388889</scope>
    <scope>SEQUENCE REVISION</scope>
</reference>
<reference key="5">
    <citation type="journal article" date="2004" name="Nat. Genet.">
        <title>Complete sequencing and characterization of 21,243 full-length human cDNAs.</title>
        <authorList>
            <person name="Ota T."/>
            <person name="Suzuki Y."/>
            <person name="Nishikawa T."/>
            <person name="Otsuki T."/>
            <person name="Sugiyama T."/>
            <person name="Irie R."/>
            <person name="Wakamatsu A."/>
            <person name="Hayashi K."/>
            <person name="Sato H."/>
            <person name="Nagai K."/>
            <person name="Kimura K."/>
            <person name="Makita H."/>
            <person name="Sekine M."/>
            <person name="Obayashi M."/>
            <person name="Nishi T."/>
            <person name="Shibahara T."/>
            <person name="Tanaka T."/>
            <person name="Ishii S."/>
            <person name="Yamamoto J."/>
            <person name="Saito K."/>
            <person name="Kawai Y."/>
            <person name="Isono Y."/>
            <person name="Nakamura Y."/>
            <person name="Nagahari K."/>
            <person name="Murakami K."/>
            <person name="Yasuda T."/>
            <person name="Iwayanagi T."/>
            <person name="Wagatsuma M."/>
            <person name="Shiratori A."/>
            <person name="Sudo H."/>
            <person name="Hosoiri T."/>
            <person name="Kaku Y."/>
            <person name="Kodaira H."/>
            <person name="Kondo H."/>
            <person name="Sugawara M."/>
            <person name="Takahashi M."/>
            <person name="Kanda K."/>
            <person name="Yokoi T."/>
            <person name="Furuya T."/>
            <person name="Kikkawa E."/>
            <person name="Omura Y."/>
            <person name="Abe K."/>
            <person name="Kamihara K."/>
            <person name="Katsuta N."/>
            <person name="Sato K."/>
            <person name="Tanikawa M."/>
            <person name="Yamazaki M."/>
            <person name="Ninomiya K."/>
            <person name="Ishibashi T."/>
            <person name="Yamashita H."/>
            <person name="Murakawa K."/>
            <person name="Fujimori K."/>
            <person name="Tanai H."/>
            <person name="Kimata M."/>
            <person name="Watanabe M."/>
            <person name="Hiraoka S."/>
            <person name="Chiba Y."/>
            <person name="Ishida S."/>
            <person name="Ono Y."/>
            <person name="Takiguchi S."/>
            <person name="Watanabe S."/>
            <person name="Yosida M."/>
            <person name="Hotuta T."/>
            <person name="Kusano J."/>
            <person name="Kanehori K."/>
            <person name="Takahashi-Fujii A."/>
            <person name="Hara H."/>
            <person name="Tanase T.-O."/>
            <person name="Nomura Y."/>
            <person name="Togiya S."/>
            <person name="Komai F."/>
            <person name="Hara R."/>
            <person name="Takeuchi K."/>
            <person name="Arita M."/>
            <person name="Imose N."/>
            <person name="Musashino K."/>
            <person name="Yuuki H."/>
            <person name="Oshima A."/>
            <person name="Sasaki N."/>
            <person name="Aotsuka S."/>
            <person name="Yoshikawa Y."/>
            <person name="Matsunawa H."/>
            <person name="Ichihara T."/>
            <person name="Shiohata N."/>
            <person name="Sano S."/>
            <person name="Moriya S."/>
            <person name="Momiyama H."/>
            <person name="Satoh N."/>
            <person name="Takami S."/>
            <person name="Terashima Y."/>
            <person name="Suzuki O."/>
            <person name="Nakagawa S."/>
            <person name="Senoh A."/>
            <person name="Mizoguchi H."/>
            <person name="Goto Y."/>
            <person name="Shimizu F."/>
            <person name="Wakebe H."/>
            <person name="Hishigaki H."/>
            <person name="Watanabe T."/>
            <person name="Sugiyama A."/>
            <person name="Takemoto M."/>
            <person name="Kawakami B."/>
            <person name="Yamazaki M."/>
            <person name="Watanabe K."/>
            <person name="Kumagai A."/>
            <person name="Itakura S."/>
            <person name="Fukuzumi Y."/>
            <person name="Fujimori Y."/>
            <person name="Komiyama M."/>
            <person name="Tashiro H."/>
            <person name="Tanigami A."/>
            <person name="Fujiwara T."/>
            <person name="Ono T."/>
            <person name="Yamada K."/>
            <person name="Fujii Y."/>
            <person name="Ozaki K."/>
            <person name="Hirao M."/>
            <person name="Ohmori Y."/>
            <person name="Kawabata A."/>
            <person name="Hikiji T."/>
            <person name="Kobatake N."/>
            <person name="Inagaki H."/>
            <person name="Ikema Y."/>
            <person name="Okamoto S."/>
            <person name="Okitani R."/>
            <person name="Kawakami T."/>
            <person name="Noguchi S."/>
            <person name="Itoh T."/>
            <person name="Shigeta K."/>
            <person name="Senba T."/>
            <person name="Matsumura K."/>
            <person name="Nakajima Y."/>
            <person name="Mizuno T."/>
            <person name="Morinaga M."/>
            <person name="Sasaki M."/>
            <person name="Togashi T."/>
            <person name="Oyama M."/>
            <person name="Hata H."/>
            <person name="Watanabe M."/>
            <person name="Komatsu T."/>
            <person name="Mizushima-Sugano J."/>
            <person name="Satoh T."/>
            <person name="Shirai Y."/>
            <person name="Takahashi Y."/>
            <person name="Nakagawa K."/>
            <person name="Okumura K."/>
            <person name="Nagase T."/>
            <person name="Nomura N."/>
            <person name="Kikuchi H."/>
            <person name="Masuho Y."/>
            <person name="Yamashita R."/>
            <person name="Nakai K."/>
            <person name="Yada T."/>
            <person name="Nakamura Y."/>
            <person name="Ohara O."/>
            <person name="Isogai T."/>
            <person name="Sugano S."/>
        </authorList>
    </citation>
    <scope>NUCLEOTIDE SEQUENCE [LARGE SCALE MRNA] (ISOFORM 1)</scope>
    <scope>VARIANTS PHE-160; VAL-408; MET-420 DEL AND ARG-465</scope>
    <source>
        <tissue>Caudate nucleus</tissue>
    </source>
</reference>
<reference key="6">
    <citation type="journal article" date="2003" name="Nature">
        <title>The DNA sequence and analysis of human chromosome 6.</title>
        <authorList>
            <person name="Mungall A.J."/>
            <person name="Palmer S.A."/>
            <person name="Sims S.K."/>
            <person name="Edwards C.A."/>
            <person name="Ashurst J.L."/>
            <person name="Wilming L."/>
            <person name="Jones M.C."/>
            <person name="Horton R."/>
            <person name="Hunt S.E."/>
            <person name="Scott C.E."/>
            <person name="Gilbert J.G.R."/>
            <person name="Clamp M.E."/>
            <person name="Bethel G."/>
            <person name="Milne S."/>
            <person name="Ainscough R."/>
            <person name="Almeida J.P."/>
            <person name="Ambrose K.D."/>
            <person name="Andrews T.D."/>
            <person name="Ashwell R.I.S."/>
            <person name="Babbage A.K."/>
            <person name="Bagguley C.L."/>
            <person name="Bailey J."/>
            <person name="Banerjee R."/>
            <person name="Barker D.J."/>
            <person name="Barlow K.F."/>
            <person name="Bates K."/>
            <person name="Beare D.M."/>
            <person name="Beasley H."/>
            <person name="Beasley O."/>
            <person name="Bird C.P."/>
            <person name="Blakey S.E."/>
            <person name="Bray-Allen S."/>
            <person name="Brook J."/>
            <person name="Brown A.J."/>
            <person name="Brown J.Y."/>
            <person name="Burford D.C."/>
            <person name="Burrill W."/>
            <person name="Burton J."/>
            <person name="Carder C."/>
            <person name="Carter N.P."/>
            <person name="Chapman J.C."/>
            <person name="Clark S.Y."/>
            <person name="Clark G."/>
            <person name="Clee C.M."/>
            <person name="Clegg S."/>
            <person name="Cobley V."/>
            <person name="Collier R.E."/>
            <person name="Collins J.E."/>
            <person name="Colman L.K."/>
            <person name="Corby N.R."/>
            <person name="Coville G.J."/>
            <person name="Culley K.M."/>
            <person name="Dhami P."/>
            <person name="Davies J."/>
            <person name="Dunn M."/>
            <person name="Earthrowl M.E."/>
            <person name="Ellington A.E."/>
            <person name="Evans K.A."/>
            <person name="Faulkner L."/>
            <person name="Francis M.D."/>
            <person name="Frankish A."/>
            <person name="Frankland J."/>
            <person name="French L."/>
            <person name="Garner P."/>
            <person name="Garnett J."/>
            <person name="Ghori M.J."/>
            <person name="Gilby L.M."/>
            <person name="Gillson C.J."/>
            <person name="Glithero R.J."/>
            <person name="Grafham D.V."/>
            <person name="Grant M."/>
            <person name="Gribble S."/>
            <person name="Griffiths C."/>
            <person name="Griffiths M.N.D."/>
            <person name="Hall R."/>
            <person name="Halls K.S."/>
            <person name="Hammond S."/>
            <person name="Harley J.L."/>
            <person name="Hart E.A."/>
            <person name="Heath P.D."/>
            <person name="Heathcott R."/>
            <person name="Holmes S.J."/>
            <person name="Howden P.J."/>
            <person name="Howe K.L."/>
            <person name="Howell G.R."/>
            <person name="Huckle E."/>
            <person name="Humphray S.J."/>
            <person name="Humphries M.D."/>
            <person name="Hunt A.R."/>
            <person name="Johnson C.M."/>
            <person name="Joy A.A."/>
            <person name="Kay M."/>
            <person name="Keenan S.J."/>
            <person name="Kimberley A.M."/>
            <person name="King A."/>
            <person name="Laird G.K."/>
            <person name="Langford C."/>
            <person name="Lawlor S."/>
            <person name="Leongamornlert D.A."/>
            <person name="Leversha M."/>
            <person name="Lloyd C.R."/>
            <person name="Lloyd D.M."/>
            <person name="Loveland J.E."/>
            <person name="Lovell J."/>
            <person name="Martin S."/>
            <person name="Mashreghi-Mohammadi M."/>
            <person name="Maslen G.L."/>
            <person name="Matthews L."/>
            <person name="McCann O.T."/>
            <person name="McLaren S.J."/>
            <person name="McLay K."/>
            <person name="McMurray A."/>
            <person name="Moore M.J.F."/>
            <person name="Mullikin J.C."/>
            <person name="Niblett D."/>
            <person name="Nickerson T."/>
            <person name="Novik K.L."/>
            <person name="Oliver K."/>
            <person name="Overton-Larty E.K."/>
            <person name="Parker A."/>
            <person name="Patel R."/>
            <person name="Pearce A.V."/>
            <person name="Peck A.I."/>
            <person name="Phillimore B.J.C.T."/>
            <person name="Phillips S."/>
            <person name="Plumb R.W."/>
            <person name="Porter K.M."/>
            <person name="Ramsey Y."/>
            <person name="Ranby S.A."/>
            <person name="Rice C.M."/>
            <person name="Ross M.T."/>
            <person name="Searle S.M."/>
            <person name="Sehra H.K."/>
            <person name="Sheridan E."/>
            <person name="Skuce C.D."/>
            <person name="Smith S."/>
            <person name="Smith M."/>
            <person name="Spraggon L."/>
            <person name="Squares S.L."/>
            <person name="Steward C.A."/>
            <person name="Sycamore N."/>
            <person name="Tamlyn-Hall G."/>
            <person name="Tester J."/>
            <person name="Theaker A.J."/>
            <person name="Thomas D.W."/>
            <person name="Thorpe A."/>
            <person name="Tracey A."/>
            <person name="Tromans A."/>
            <person name="Tubby B."/>
            <person name="Wall M."/>
            <person name="Wallis J.M."/>
            <person name="West A.P."/>
            <person name="White S.S."/>
            <person name="Whitehead S.L."/>
            <person name="Whittaker H."/>
            <person name="Wild A."/>
            <person name="Willey D.J."/>
            <person name="Wilmer T.E."/>
            <person name="Wood J.M."/>
            <person name="Wray P.W."/>
            <person name="Wyatt J.C."/>
            <person name="Young L."/>
            <person name="Younger R.M."/>
            <person name="Bentley D.R."/>
            <person name="Coulson A."/>
            <person name="Durbin R.M."/>
            <person name="Hubbard T."/>
            <person name="Sulston J.E."/>
            <person name="Dunham I."/>
            <person name="Rogers J."/>
            <person name="Beck S."/>
        </authorList>
    </citation>
    <scope>NUCLEOTIDE SEQUENCE [LARGE SCALE GENOMIC DNA]</scope>
</reference>
<reference key="7">
    <citation type="journal article" date="2004" name="Genome Res.">
        <title>The status, quality, and expansion of the NIH full-length cDNA project: the Mammalian Gene Collection (MGC).</title>
        <authorList>
            <consortium name="The MGC Project Team"/>
        </authorList>
    </citation>
    <scope>NUCLEOTIDE SEQUENCE [LARGE SCALE MRNA] (ISOFORM 1)</scope>
    <scope>VARIANT PHE-160</scope>
</reference>
<reference key="8">
    <citation type="journal article" date="1998" name="J. Pharmacol. Exp. Ther.">
        <title>Functional characterization of an organic cation transporter (hOCT1) in a transiently transfected human cell line (HeLa).</title>
        <authorList>
            <person name="Zhang L."/>
            <person name="Schaner M.E."/>
            <person name="Giacomini K.M."/>
        </authorList>
    </citation>
    <scope>FUNCTION</scope>
    <scope>BIOPHYSICOCHEMICAL PROPERTIES</scope>
    <scope>MISCELLANEOUS</scope>
</reference>
<reference key="9">
    <citation type="journal article" date="2001" name="J. Pharmacol. Exp. Ther.">
        <title>Comparison of 'type I' and 'type II' organic cation transport by organic cation transporters and organic anion-transporting polypeptides.</title>
        <authorList>
            <person name="van Montfoort J.E."/>
            <person name="Mueller M."/>
            <person name="Groothuis G.M.M."/>
            <person name="Meijer D.K.F."/>
            <person name="Koepsell H."/>
            <person name="Meier P.J."/>
        </authorList>
    </citation>
    <scope>FUNCTION</scope>
    <scope>BIOPHYSICOCHEMICAL PROPERTIES</scope>
</reference>
<reference key="10">
    <citation type="journal article" date="2002" name="J. Pharmacol. Exp. Ther.">
        <title>Human organic anion transporters and human organic cation transporters mediate renal transport of prostaglandins.</title>
        <authorList>
            <person name="Kimura H."/>
            <person name="Takeda M."/>
            <person name="Narikawa S."/>
            <person name="Enomoto A."/>
            <person name="Ichida K."/>
            <person name="Endou H."/>
        </authorList>
    </citation>
    <scope>FUNCTION</scope>
    <scope>TRANSPORTER ACTIVITY</scope>
    <scope>BIOPHYSICOCHEMICAL PROPERTIES</scope>
</reference>
<reference key="11">
    <citation type="journal article" date="2004" name="J. Cell. Physiol.">
        <title>Regulation of the human organic cation transporter hOCT1.</title>
        <authorList>
            <person name="Ciarimboli G."/>
            <person name="Struwe K."/>
            <person name="Arndt P."/>
            <person name="Gorboulev V."/>
            <person name="Koepsell H."/>
            <person name="Schlatter E."/>
            <person name="Hirsch J.R."/>
        </authorList>
    </citation>
    <scope>FUNCTION</scope>
    <scope>ACTIVITY REGULATION</scope>
</reference>
<reference key="12">
    <citation type="journal article" date="2005" name="Am. J. Respir. Cell Mol. Biol.">
        <title>Polyspecific cation transporters mediate luminal release of acetylcholine from bronchial epithelium.</title>
        <authorList>
            <person name="Lips K.S."/>
            <person name="Volk C."/>
            <person name="Schmitt B.M."/>
            <person name="Pfeil U."/>
            <person name="Arndt P."/>
            <person name="Miska D."/>
            <person name="Ermert L."/>
            <person name="Kummer W."/>
            <person name="Koepsell H."/>
        </authorList>
    </citation>
    <scope>FUNCTION</scope>
    <scope>TRANSPORTER ACTIVITY</scope>
    <scope>SUBCELLULAR LOCATION</scope>
    <scope>TISSUE SPECIFICITY</scope>
</reference>
<reference key="13">
    <citation type="journal article" date="2005" name="Biochem. Pharmacol.">
        <title>Drug specificity and intestinal membrane localization of human organic cation transporters (OCT).</title>
        <authorList>
            <person name="Mueller J."/>
            <person name="Lips K.S."/>
            <person name="Metzner L."/>
            <person name="Neubert R.H.H."/>
            <person name="Koepsell H."/>
            <person name="Brandsch M."/>
        </authorList>
    </citation>
    <scope>FUNCTION</scope>
    <scope>SUBCELLULAR LOCATION</scope>
    <scope>TISSUE SPECIFICITY</scope>
    <scope>MISCELLANEOUS</scope>
</reference>
<reference key="14">
    <citation type="journal article" date="2005" name="Drug Metab. Pharmacokinet.">
        <title>Metformin is a superior substrate for renal organic cation transporter OCT2 rather than hepatic OCT1.</title>
        <authorList>
            <person name="Kimura N."/>
            <person name="Masuda S."/>
            <person name="Tanihara Y."/>
            <person name="Ueo H."/>
            <person name="Okuda M."/>
            <person name="Katsura T."/>
            <person name="Inui K."/>
        </authorList>
    </citation>
    <scope>FUNCTION</scope>
    <scope>MISCELLANEOUS</scope>
</reference>
<reference key="15">
    <citation type="journal article" date="2006" name="Cancer Res.">
        <title>Organic cation transporters are determinants of oxaliplatin cytotoxicity.</title>
        <authorList>
            <person name="Zhang S."/>
            <person name="Lovejoy K.S."/>
            <person name="Shima J.E."/>
            <person name="Lagpacan L.L."/>
            <person name="Shu Y."/>
            <person name="Lapuk A."/>
            <person name="Chen Y."/>
            <person name="Komori T."/>
            <person name="Gray J.W."/>
            <person name="Chen X."/>
            <person name="Lippard S.J."/>
            <person name="Giacomini K.M."/>
        </authorList>
    </citation>
    <scope>MISCELLANEOUS</scope>
</reference>
<reference key="16">
    <citation type="journal article" date="2006" name="J. Pharmacol. Exp. Ther.">
        <title>The human organic cation transporter-1 gene is transactivated by hepatocyte nuclear factor-4alpha.</title>
        <authorList>
            <person name="Saborowski M."/>
            <person name="Kullak-Ublick G.A."/>
            <person name="Eloranta J.J."/>
        </authorList>
    </citation>
    <scope>INDUCTION</scope>
</reference>
<reference key="17">
    <citation type="journal article" date="2006" name="J. Pharmacol. Exp. Ther.">
        <title>Cisplatin and oxaliplatin, but not carboplatin and nedaplatin, are substrates for human organic cation transporters (SLC22A1-3 and multidrug and toxin extrusion family).</title>
        <authorList>
            <person name="Yonezawa A."/>
            <person name="Masuda S."/>
            <person name="Yokoo S."/>
            <person name="Katsura T."/>
            <person name="Inui K."/>
        </authorList>
    </citation>
    <scope>MISCELLANEOUS</scope>
</reference>
<reference key="18">
    <citation type="journal article" date="2006" name="Neuropharmacology">
        <title>Differential pharmacological in vitro properties of organic cation transporters and regional distribution in rat brain.</title>
        <authorList>
            <person name="Amphoux A."/>
            <person name="Vialou V."/>
            <person name="Drescher E."/>
            <person name="Bruess M."/>
            <person name="Mannoury La Cour C."/>
            <person name="Rochat C."/>
            <person name="Millan M.J."/>
            <person name="Giros B."/>
            <person name="Boenisch H."/>
            <person name="Gautron S."/>
        </authorList>
    </citation>
    <scope>FUNCTION</scope>
    <scope>MISCELLANEOUS</scope>
</reference>
<reference key="19">
    <citation type="journal article" date="2007" name="Fundam. Clin. Pharmacol.">
        <title>The expression of the solute carriers NTCP and OCT-1 is regulated by cholesterol in HepG2 cells.</title>
        <authorList>
            <person name="Dias V."/>
            <person name="Ribeiro V."/>
        </authorList>
    </citation>
    <scope>INDUCTION</scope>
</reference>
<reference key="20">
    <citation type="journal article" date="2007" name="PLoS ONE">
        <title>Identification of the endogenous key substrates of the human organic cation transporter OCT2 and their implication in function of dopaminergic neurons.</title>
        <authorList>
            <person name="Taubert D."/>
            <person name="Grimberg G."/>
            <person name="Stenzel W."/>
            <person name="Schoemig E."/>
        </authorList>
    </citation>
    <scope>FUNCTION</scope>
    <scope>TRANSPORTER ACTIVITY</scope>
    <scope>BIOPHYSICOCHEMICAL PROPERTIES</scope>
    <scope>TISSUE SPECIFICITY</scope>
</reference>
<reference key="21">
    <citation type="journal article" date="2009" name="Clin. Pharmacol. Ther.">
        <title>The effects of genetic polymorphisms in the organic cation transporters OCT1, OCT2, and OCT3 on the renal clearance of metformin.</title>
        <authorList>
            <person name="Tzvetkov M.V."/>
            <person name="Vormfelde S.V."/>
            <person name="Balen D."/>
            <person name="Meineke I."/>
            <person name="Schmidt T."/>
            <person name="Sehrt D."/>
            <person name="Sabolic I."/>
            <person name="Koepsell H."/>
            <person name="Brockmoeller J."/>
        </authorList>
    </citation>
    <scope>FUNCTION</scope>
    <scope>SUBCELLULAR LOCATION</scope>
    <scope>TISSUE SPECIFICITY</scope>
    <scope>MISCELLANEOUS</scope>
</reference>
<reference key="22">
    <citation type="journal article" date="2011" name="Mol. Pharm.">
        <title>OCT2 and MATE1 provide bidirectional agmatine transport.</title>
        <authorList>
            <person name="Winter T.N."/>
            <person name="Elmquist W.F."/>
            <person name="Fairbanks C.A."/>
        </authorList>
    </citation>
    <scope>FUNCTION</scope>
    <scope>TRANSPORTER ACTIVITY</scope>
    <scope>BIOPHYSICOCHEMICAL PROPERTIES</scope>
</reference>
<reference key="23">
    <citation type="journal article" date="2013" name="Mol. Pharmacol.">
        <title>Organic cation transporter 1 (OCT1/mOct1) is localized in the apical membrane of Caco-2 cell monolayers and enterocytes.</title>
        <authorList>
            <person name="Han T.K."/>
            <person name="Everett R.S."/>
            <person name="Proctor W.R."/>
            <person name="Ng C.M."/>
            <person name="Costales C.L."/>
            <person name="Brouwer K.L."/>
            <person name="Thakker D.R."/>
        </authorList>
    </citation>
    <scope>FUNCTION</scope>
    <scope>TRANSPORTER ACTIVITY</scope>
    <scope>SUBCELLULAR LOCATION</scope>
    <scope>TISSUE SPECIFICITY</scope>
    <scope>MISCELLANEOUS</scope>
</reference>
<reference key="24">
    <citation type="journal article" date="2014" name="J. Proteomics">
        <title>An enzyme assisted RP-RPLC approach for in-depth analysis of human liver phosphoproteome.</title>
        <authorList>
            <person name="Bian Y."/>
            <person name="Song C."/>
            <person name="Cheng K."/>
            <person name="Dong M."/>
            <person name="Wang F."/>
            <person name="Huang J."/>
            <person name="Sun D."/>
            <person name="Wang L."/>
            <person name="Ye M."/>
            <person name="Zou H."/>
        </authorList>
    </citation>
    <scope>PHOSPHORYLATION [LARGE SCALE ANALYSIS] AT THR-541</scope>
    <scope>IDENTIFICATION BY MASS SPECTROMETRY [LARGE SCALE ANALYSIS]</scope>
    <source>
        <tissue>Liver</tissue>
    </source>
</reference>
<reference key="25">
    <citation type="journal article" date="2014" name="Proc. Natl. Acad. Sci. U.S.A.">
        <title>OCT1 is a high-capacity thiamine transporter that regulates hepatic steatosis and is a target of metformin.</title>
        <authorList>
            <person name="Chen L."/>
            <person name="Shu Y."/>
            <person name="Liang X."/>
            <person name="Chen E.C."/>
            <person name="Yee S.W."/>
            <person name="Zur A.A."/>
            <person name="Li S."/>
            <person name="Xu L."/>
            <person name="Keshari K.R."/>
            <person name="Lin M.J."/>
            <person name="Chien H.C."/>
            <person name="Zhang Y."/>
            <person name="Morrissey K.M."/>
            <person name="Liu J."/>
            <person name="Ostrem J."/>
            <person name="Younger N.S."/>
            <person name="Kurhanewicz J."/>
            <person name="Shokat K.M."/>
            <person name="Ashrafi K."/>
            <person name="Giacomini K.M."/>
        </authorList>
    </citation>
    <scope>FUNCTION</scope>
    <scope>TRANSPORTER ACTIVITY</scope>
    <scope>BIOPHYSICOCHEMICAL PROPERTIES</scope>
    <scope>TISSUE SPECIFICITY</scope>
</reference>
<reference key="26">
    <citation type="journal article" date="2016" name="Nat. Commun.">
        <title>A phosphotyrosine switch regulates organic cation transporters.</title>
        <authorList>
            <person name="Sprowl J.A."/>
            <person name="Ong S.S."/>
            <person name="Gibson A.A."/>
            <person name="Hu S."/>
            <person name="Du G."/>
            <person name="Lin W."/>
            <person name="Li L."/>
            <person name="Bharill S."/>
            <person name="Ness R.A."/>
            <person name="Stecula A."/>
            <person name="Offer S.M."/>
            <person name="Diasio R.B."/>
            <person name="Nies A.T."/>
            <person name="Schwab M."/>
            <person name="Cavaletti G."/>
            <person name="Schlatter E."/>
            <person name="Ciarimboli G."/>
            <person name="Schellens J.H.M."/>
            <person name="Isacoff E.Y."/>
            <person name="Sali A."/>
            <person name="Chen T."/>
            <person name="Baker S.D."/>
            <person name="Sparreboom A."/>
            <person name="Pabla N."/>
        </authorList>
    </citation>
    <scope>MUTAGENESIS OF TYR-240; PRO-283; TYR-361 AND TYR-376</scope>
    <scope>DOMAIN</scope>
</reference>
<reference key="27">
    <citation type="journal article" date="2021" name="Front. Pharmacol.">
        <title>Isobutyrylcarnitine as a Biomarker of OCT1 Activity and Interspecies Differences in its Membrane Transport.</title>
        <authorList>
            <person name="Jensen O."/>
            <person name="Matthaei J."/>
            <person name="Klemp H.G."/>
            <person name="Meyer M.J."/>
            <person name="Brockmoeller J."/>
            <person name="Tzvetkov M.V."/>
        </authorList>
    </citation>
    <scope>FUNCTION</scope>
    <scope>MISCELLANEOUS</scope>
</reference>
<reference key="28">
    <citation type="journal article" date="2022" name="Drug Metab. Dispos.">
        <title>Localization of Xenobiotic Transporters Expressed at the Human Blood-Testis Barrier.</title>
        <authorList>
            <person name="Hau R.K."/>
            <person name="Klein R.R."/>
            <person name="Wright S.H."/>
            <person name="Cherrington N.J."/>
        </authorList>
    </citation>
    <scope>FUNCTION</scope>
    <scope>SUBCELLULAR LOCATION</scope>
    <scope>TISSUE SPECIFICITY</scope>
</reference>
<reference key="29">
    <citation type="journal article" date="2022" name="J. Biol. Chem.">
        <title>Amino acids in transmembrane helix 1 confer major functional differences between human and mouse orthologs of the polyspecific membrane transporter OCT1.</title>
        <authorList>
            <person name="Meyer M.J."/>
            <person name="Schreier P.C.F."/>
            <person name="Basaran M."/>
            <person name="Vlasova S."/>
            <person name="Seitz T."/>
            <person name="Brockmoeller J."/>
            <person name="Zdrazil B."/>
            <person name="Tzvetkov M.V."/>
        </authorList>
    </citation>
    <scope>FUNCTION</scope>
    <scope>TRANSPORTER ACTIVITY</scope>
    <scope>BIOPHYSICOCHEMICAL PROPERTIES</scope>
    <scope>SUBCELLULAR LOCATION</scope>
    <scope>DOMAIN</scope>
    <scope>MISCELLANEOUS</scope>
    <scope>MUTAGENESIS OF ILE-24; LEU-28; ALA-31; PHE-32 AND CYS-36</scope>
</reference>
<reference key="30">
    <citation type="journal article" date="2002" name="Pharmacogenetics">
        <title>Identification of genetic variations of the human organic cation transporter hOCT1 and their functional consequences.</title>
        <authorList>
            <person name="Kerb R."/>
            <person name="Brinkmann U."/>
            <person name="Chatskaia N."/>
            <person name="Gorbunov D."/>
            <person name="Gorboulev V."/>
            <person name="Mornhinweg E."/>
            <person name="Keil A."/>
            <person name="Eichelbaum M."/>
            <person name="Koepsell H."/>
        </authorList>
    </citation>
    <scope>VARIANTS CYS-61; ARG-88; PHE-160; SER-401 AND MET-420 DEL</scope>
    <scope>CHARACTERIZATION OF VARIANTS CYS-61; ARG-88; PHE-160; SER-401 AND MET-420 DEL</scope>
    <scope>FUNCTION</scope>
    <scope>TRANSPORTER ACTIVITY</scope>
    <scope>MISCELLANEOUS</scope>
</reference>
<reference key="31">
    <citation type="journal article" date="2003" name="Proc. Natl. Acad. Sci. U.S.A.">
        <title>Evolutionary conservation predicts function of variants of the human organic cation transporter, OCT1.</title>
        <authorList>
            <person name="Shu Y."/>
            <person name="Leabman M.K."/>
            <person name="Feng B."/>
            <person name="Mangravite L.M."/>
            <person name="Huang C.C."/>
            <person name="Stryke D."/>
            <person name="Kawamoto M."/>
            <person name="Johns S.J."/>
            <person name="DeYoung J."/>
            <person name="Carlson E."/>
            <person name="Ferrin T.E."/>
            <person name="Herskowitz I."/>
            <person name="Giacomini K.M."/>
        </authorList>
    </citation>
    <scope>VARIANTS PHE-14; CYS-61; PHE-85; PHE-160; LEU-189; VAL-220; LEU-341; HIS-342; SER-401; VAL-408; MET-420 DEL; ILE-440; ILE-461; ARG-465 AND MET-488</scope>
    <scope>CHARACTERIZATION OF VARIANTS PHE-14; CYS-61; PHE-85; PHE-160; LEU-189; VAL-220; LEU-341; HIS-342; SER-401; VAL-408; MET-420 DEL; ILE-440; ILE-461; ARG-465 AND MET-488</scope>
    <scope>MUTAGENESIS OF GLY-465</scope>
    <scope>FUNCTION</scope>
    <scope>SUBCELLULAR LOCATION</scope>
    <scope>MISCELLANEOUS</scope>
</reference>
<reference key="32">
    <citation type="journal article" date="2004" name="Biochem. Biophys. Res. Commun.">
        <title>Novel single nucleotide polymorphisms of organic cation transporter 1 (SLC22A1) affecting transport functions.</title>
        <authorList>
            <person name="Sakata T."/>
            <person name="Anzai N."/>
            <person name="Shin H.J."/>
            <person name="Noshiro R."/>
            <person name="Hirata T."/>
            <person name="Yokoyama H."/>
            <person name="Kanai Y."/>
            <person name="Endou H."/>
        </authorList>
    </citation>
    <scope>VARIANTS PHE-160; LEU-283; GLY-287 AND LEU-341</scope>
</reference>
<reference key="33">
    <citation type="journal article" date="2004" name="Drug Metab. Pharmacokinet.">
        <title>Seven novel single nucleotide polymorphisms in the human SLC22A1 gene encoding organic cation transporter 1 (OCT1).</title>
        <authorList>
            <person name="Itoda M."/>
            <person name="Saito Y."/>
            <person name="Maekawa K."/>
            <person name="Hichiya H."/>
            <person name="Komamura K."/>
            <person name="Kamakura S."/>
            <person name="Kitakaze M."/>
            <person name="Tomoike H."/>
            <person name="Ueno K."/>
            <person name="Ozawa S."/>
            <person name="Sawada J."/>
        </authorList>
    </citation>
    <scope>VARIANTS LEU-41; PHE-160; LEU-341 AND VAL-408</scope>
</reference>
<reference key="34">
    <citation type="journal article" date="2017" name="Am. J. Hum. Genet.">
        <title>Fine Mapping and Functional Analysis Reveal a Role of SLC22A1 in Acylcarnitine Transport.</title>
        <authorList>
            <person name="Kim H.I."/>
            <person name="Raffler J."/>
            <person name="Lu W."/>
            <person name="Lee J.J."/>
            <person name="Abbey D."/>
            <person name="Saleheen D."/>
            <person name="Rabinowitz J.D."/>
            <person name="Bennett M.J."/>
            <person name="Hand N.J."/>
            <person name="Brown C."/>
            <person name="Rader D.J."/>
        </authorList>
    </citation>
    <scope>VARIANTS CYS-61 AND MET-420 DEL</scope>
    <scope>CHARACTERIZATION OF VARIANTS CYS-61 AND MET-420 DEL</scope>
</reference>
<evidence type="ECO:0000250" key="1">
    <source>
        <dbReference type="UniProtKB" id="O08966"/>
    </source>
</evidence>
<evidence type="ECO:0000250" key="2">
    <source>
        <dbReference type="UniProtKB" id="Q63089"/>
    </source>
</evidence>
<evidence type="ECO:0000255" key="3"/>
<evidence type="ECO:0000269" key="4">
    <source>
    </source>
</evidence>
<evidence type="ECO:0000269" key="5">
    <source>
    </source>
</evidence>
<evidence type="ECO:0000269" key="6">
    <source>
    </source>
</evidence>
<evidence type="ECO:0000269" key="7">
    <source>
    </source>
</evidence>
<evidence type="ECO:0000269" key="8">
    <source>
    </source>
</evidence>
<evidence type="ECO:0000269" key="9">
    <source>
    </source>
</evidence>
<evidence type="ECO:0000269" key="10">
    <source>
    </source>
</evidence>
<evidence type="ECO:0000269" key="11">
    <source>
    </source>
</evidence>
<evidence type="ECO:0000269" key="12">
    <source>
    </source>
</evidence>
<evidence type="ECO:0000269" key="13">
    <source>
    </source>
</evidence>
<evidence type="ECO:0000269" key="14">
    <source>
    </source>
</evidence>
<evidence type="ECO:0000269" key="15">
    <source>
    </source>
</evidence>
<evidence type="ECO:0000269" key="16">
    <source>
    </source>
</evidence>
<evidence type="ECO:0000269" key="17">
    <source>
    </source>
</evidence>
<evidence type="ECO:0000269" key="18">
    <source>
    </source>
</evidence>
<evidence type="ECO:0000269" key="19">
    <source>
    </source>
</evidence>
<evidence type="ECO:0000269" key="20">
    <source>
    </source>
</evidence>
<evidence type="ECO:0000269" key="21">
    <source>
    </source>
</evidence>
<evidence type="ECO:0000269" key="22">
    <source>
    </source>
</evidence>
<evidence type="ECO:0000269" key="23">
    <source>
    </source>
</evidence>
<evidence type="ECO:0000269" key="24">
    <source>
    </source>
</evidence>
<evidence type="ECO:0000269" key="25">
    <source>
    </source>
</evidence>
<evidence type="ECO:0000269" key="26">
    <source>
    </source>
</evidence>
<evidence type="ECO:0000269" key="27">
    <source>
    </source>
</evidence>
<evidence type="ECO:0000269" key="28">
    <source>
    </source>
</evidence>
<evidence type="ECO:0000269" key="29">
    <source>
    </source>
</evidence>
<evidence type="ECO:0000269" key="30">
    <source>
    </source>
</evidence>
<evidence type="ECO:0000269" key="31">
    <source>
    </source>
</evidence>
<evidence type="ECO:0000269" key="32">
    <source>
    </source>
</evidence>
<evidence type="ECO:0000269" key="33">
    <source>
    </source>
</evidence>
<evidence type="ECO:0000269" key="34">
    <source>
    </source>
</evidence>
<evidence type="ECO:0000303" key="35">
    <source>
    </source>
</evidence>
<evidence type="ECO:0000303" key="36">
    <source>
    </source>
</evidence>
<evidence type="ECO:0000305" key="37"/>
<evidence type="ECO:0000305" key="38">
    <source>
    </source>
</evidence>
<evidence type="ECO:0000305" key="39">
    <source>
    </source>
</evidence>
<evidence type="ECO:0000312" key="40">
    <source>
        <dbReference type="HGNC" id="HGNC:10963"/>
    </source>
</evidence>
<evidence type="ECO:0007744" key="41">
    <source>
    </source>
</evidence>
<evidence type="ECO:0007829" key="42">
    <source>
        <dbReference type="PDB" id="8JTY"/>
    </source>
</evidence>
<evidence type="ECO:0007829" key="43">
    <source>
        <dbReference type="PDB" id="8JTZ"/>
    </source>
</evidence>
<evidence type="ECO:0007829" key="44">
    <source>
        <dbReference type="PDB" id="8JU0"/>
    </source>
</evidence>
<evidence type="ECO:0007829" key="45">
    <source>
        <dbReference type="PDB" id="8SC1"/>
    </source>
</evidence>
<evidence type="ECO:0007829" key="46">
    <source>
        <dbReference type="PDB" id="8SC3"/>
    </source>
</evidence>
<evidence type="ECO:0007829" key="47">
    <source>
        <dbReference type="PDB" id="8SC4"/>
    </source>
</evidence>
<protein>
    <recommendedName>
        <fullName evidence="35">Solute carrier family 22 member 1</fullName>
    </recommendedName>
    <alternativeName>
        <fullName evidence="36">Organic cation transporter 1</fullName>
        <shortName evidence="36">hOCT1</shortName>
    </alternativeName>
</protein>
<keyword id="KW-0002">3D-structure</keyword>
<keyword id="KW-0025">Alternative splicing</keyword>
<keyword id="KW-1003">Cell membrane</keyword>
<keyword id="KW-0325">Glycoprotein</keyword>
<keyword id="KW-0406">Ion transport</keyword>
<keyword id="KW-0472">Membrane</keyword>
<keyword id="KW-0597">Phosphoprotein</keyword>
<keyword id="KW-1267">Proteomics identification</keyword>
<keyword id="KW-1185">Reference proteome</keyword>
<keyword id="KW-0812">Transmembrane</keyword>
<keyword id="KW-1133">Transmembrane helix</keyword>
<keyword id="KW-0813">Transport</keyword>